<sequence>MSTCCWCTPGGASTIDFLKRYASNTPSGEFQTADEDLCYCLECVAEYHKARDELPFLHEVLWELETLRLINHFEKSMKAEIGDDDELYIVDNNGEMPLFDITGQDFENKLRVPLLEILKYPYLLLHERVNELCVEALCRMEQANCSFQVFDKHPGIYLFLVHPNEMVRRWAILTARNLGKVDRDDYYDLQEVLLCLFKVIELGLLESPDIYTSSVLEKGKLILLPSHMYDTTNYKSYWLGICMLLTILEEQAMDSLLLGSDKQNDFMQSILHTMEREADDDSVDPFWPALHCFMVILDRLGSKVWGQLMDPIVAFQTIINNASYNREIRHIRNSSVRTKLEPESYLDDMVTCSQIVYNYNPEKTKKDSGWRTAICPDYCPNMYEEMETLASVLQSDIGQDMRVHNSTFLWFIPFVQSLMDLKDLGVAYIAQVVNHLYSEVKEVLNQTDAVCDKVTEFFLLILVSVIELHRNKKCLHLLWVSSQQWVEAVVKCAKLPTTAFTRSSEKSSGNCSKGTAMISSLSLHSMPSNSVQLAYVQLIRSLLKEGYQLGQQSLCKRFWDKLNLFLRGNLSLGWQLTSQETHELQSCLKQIIRNIKFKAPPCNTFVDLTSACKISPASYNKEESEQMGKTSRKDMHCLEASSPTFSKEPMKVQDSVLIKADNTIEGDNNEQNYIKDVKLEDHLLAGSCLKQSSKNIFTERAEDQIKISTRKQKSVKEISSYTPKDCTSRNGPERGCDRGIIVSTRLLTDSSTDALEKVSTSNEDFSLKDDALAKTSKRKTKVQKDEICAKLSHVIKKQHRKSTLVDNTINLDENLTVSNIESFYSRKDTGVQKGDGFIHNLSLDPSGVLDDKNGEQKSQNNVLPKEKQLKNEELVIFSFHENNCKIQEFHVDGKELIPFTEMTNASEKKSSPFKDLMTVPESRDEEMSNSTSVIYSNLTREQAPDISPKSDTLTDSQIDRDLHKLSLLAQASVITFPSDSPQNSSQLQRKVKEDKRCFTANQNNVGDTSRGQVIIISDSDDDDDERILSLEKLTKQDKICLEREHPEQHVSTVNSKEEKNPVKEEKTETLFQFEESDSQCFEFESSSEVFSVWQDHPDDNNSVQDGEKKCLAPIANTTNGQGCTDYVSEVVKKGAEGIEEHTRPRSISVEEFCEIEVKKPKRKRSEKPMAEDPVRPSSSVRNEGQSDTNKRDLVGNDFKSIDRRTSTPNSRIQRATTVSQKKSSKLCTCTEPIRKVPVSKTPKKTHSDAKKGQNRSSNYLSCRTTPAIVPPKKFRQCPEPTSTAEKLGLKKGPRKAYELSQRSLDYVAQLRDHGKTVGVVDTRKKTKLISPQNLSVRNNKKLLTSQELQMQRQIRPKSQKNRRRLSDCESTDVKRAGSHTAQNSDIFVPESDRSDYNCTGGTEVLANSNRKQLIKCMPSEPETIKAKHGSPATDDACPLNQCDSVVLNGTVPTNEVIVSTSEDPLGGGDPTARHIEMAALKEGEPDSSSDAEEDNLFLTQNDPEDMDLCSQMENDNYKLIELIHGKDTVEVEEDSVSRPQLESLSGTKCKYKDCLETTKNQGEYCPKHSEVKAADEDVFRKPGLPPPASKPLRPTTKIFSSKSTSRIAGLSKSLETSSALSPSLKNKSKGIQSILKVPQPVPLIAQKPVGEMKNSCNVLHPQSPNNSNRQGCKVPFGESKYFPSSSPVNILLSSQSVSDTFVKEVLKWKYEMFLNFGQCGPPASLCQSISRPVPVRFHNYGDYFNVFFPLMVLNTFETVAQEWLNSPNRENFYQLQVRKFPADYIKYWEFAVYLEECELAKQLYPKENDLVFLAPERINEEKKDTERNDIQDLHEYHSGYVHKFRRTSVMRNGKTECYLSIQTQENFPANLNELVNCIVISSLVTTQRKLKAMSLLGSRNQLARAVLNPNPMDFCTKDLLTTTSERIIAYLRDFNEDQKKAIETAYAMVKHSPSVAKICLIHGPPGTGKSKTIVGLLYRLLTENQRKGHSDENSNAKIKQNRVLVCAPSNAAVDELMKKIILEFKEKCKDKKNPLGNCGDINLVRLGPEKSINSEVLKFSLDSQVNHRMKKELPSHVQAMHKRKEFLDYQLDELSRQRALCRGGREIQRQELDENISKVSKERQELASKIKEVQGRPQKTQSIIILESHIICCTLSTSGGLLLESAFRGQGGVPFSCVIVDEAGQSCEIETLTPLIHRCNKLILVGDPKQLPPTVISMKAQEYGYDQSMMARFCRLLEENVEHNMISRLPILQLTVQYRMHPDICLFPSNYVYNRNLKTNRQTEAIRCSSDWPFQPYLVFDVGDGSERRDNDSYINVQEIKLVMEIIKLIKDKRKDVSFRNIGIITHYKAQKTMIQKDLDKEFDRKGPAEVDTVDAFQGRQKDCVIVTCVRANSIQGSIGFLASLQRLNVTITRAKYSLFILGHLRTLMENQHWNQLIQDAQKRGAIIKTCDKNYRHDAVKILKLKPVLQRSLTHPPTIAPEGSRPQGGLPSSKLDSGFAKTSVAASLYHTPSDSKEITLTVTSKDPERPPVHDQLQDPRLLKRMGIEVKGGIFLWDPQPSSPQHPGATPPTGEPGFPVVHQDLSHIQQPAAVVAALSSHKPPVRGEPPAASPEASTCQSKCDDPEEELCHRREARAFSEGEQEKCGSETHHTRRNSRWDKRTLEQEDSSSKKRKLL</sequence>
<organism>
    <name type="scientific">Homo sapiens</name>
    <name type="common">Human</name>
    <dbReference type="NCBI Taxonomy" id="9606"/>
    <lineage>
        <taxon>Eukaryota</taxon>
        <taxon>Metazoa</taxon>
        <taxon>Chordata</taxon>
        <taxon>Craniata</taxon>
        <taxon>Vertebrata</taxon>
        <taxon>Euteleostomi</taxon>
        <taxon>Mammalia</taxon>
        <taxon>Eutheria</taxon>
        <taxon>Euarchontoglires</taxon>
        <taxon>Primates</taxon>
        <taxon>Haplorrhini</taxon>
        <taxon>Catarrhini</taxon>
        <taxon>Hominidae</taxon>
        <taxon>Homo</taxon>
    </lineage>
</organism>
<accession>Q7Z333</accession>
<accession>A2A396</accession>
<accession>B2RPB2</accession>
<accession>B5ME16</accession>
<accession>C9JQ10</accession>
<accession>O75120</accession>
<accession>Q3KQX4</accession>
<accession>Q5JUJ1</accession>
<accession>Q68DW5</accession>
<accession>Q6AZD7</accession>
<accession>Q7Z3J6</accession>
<accession>Q8WX33</accession>
<accession>Q9H9D1</accession>
<accession>Q9NVP9</accession>
<feature type="chain" id="PRO_0000080724" description="Probable helicase senataxin">
    <location>
        <begin position="1"/>
        <end position="2677"/>
    </location>
</feature>
<feature type="region of interest" description="Disordered" evidence="3">
    <location>
        <begin position="1158"/>
        <end position="1219"/>
    </location>
</feature>
<feature type="region of interest" description="Disordered" evidence="3">
    <location>
        <begin position="1237"/>
        <end position="1258"/>
    </location>
</feature>
<feature type="region of interest" description="Disordered" evidence="3">
    <location>
        <begin position="1351"/>
        <end position="1385"/>
    </location>
</feature>
<feature type="region of interest" description="Disordered" evidence="3">
    <location>
        <begin position="1579"/>
        <end position="1604"/>
    </location>
</feature>
<feature type="region of interest" description="Disordered" evidence="3">
    <location>
        <begin position="2474"/>
        <end position="2496"/>
    </location>
</feature>
<feature type="region of interest" description="Disordered" evidence="3">
    <location>
        <begin position="2556"/>
        <end position="2577"/>
    </location>
</feature>
<feature type="region of interest" description="Disordered" evidence="3">
    <location>
        <begin position="2597"/>
        <end position="2677"/>
    </location>
</feature>
<feature type="region of interest" description="Necessary for nuclear localization">
    <location>
        <begin position="2661"/>
        <end position="2677"/>
    </location>
</feature>
<feature type="coiled-coil region" evidence="2">
    <location>
        <begin position="2105"/>
        <end position="2136"/>
    </location>
</feature>
<feature type="short sequence motif" description="Bipartite nuclear localization signal" evidence="2">
    <location>
        <begin position="2070"/>
        <end position="2087"/>
    </location>
</feature>
<feature type="compositionally biased region" description="Polar residues" evidence="3">
    <location>
        <begin position="1176"/>
        <end position="1187"/>
    </location>
</feature>
<feature type="compositionally biased region" description="Basic and acidic residues" evidence="3">
    <location>
        <begin position="1188"/>
        <end position="1205"/>
    </location>
</feature>
<feature type="compositionally biased region" description="Polar residues" evidence="3">
    <location>
        <begin position="1206"/>
        <end position="1219"/>
    </location>
</feature>
<feature type="compositionally biased region" description="Basic residues" evidence="3">
    <location>
        <begin position="1354"/>
        <end position="1363"/>
    </location>
</feature>
<feature type="compositionally biased region" description="Basic and acidic residues" evidence="3">
    <location>
        <begin position="1364"/>
        <end position="1375"/>
    </location>
</feature>
<feature type="compositionally biased region" description="Pro residues" evidence="3">
    <location>
        <begin position="2560"/>
        <end position="2573"/>
    </location>
</feature>
<feature type="compositionally biased region" description="Basic and acidic residues" evidence="3">
    <location>
        <begin position="2628"/>
        <end position="2671"/>
    </location>
</feature>
<feature type="binding site" evidence="2">
    <location>
        <begin position="1963"/>
        <end position="1970"/>
    </location>
    <ligand>
        <name>ATP</name>
        <dbReference type="ChEBI" id="CHEBI:30616"/>
    </ligand>
</feature>
<feature type="modified residue" description="Phosphoserine" evidence="31">
    <location>
        <position position="615"/>
    </location>
</feature>
<feature type="modified residue" description="Phosphoserine" evidence="35">
    <location>
        <position position="642"/>
    </location>
</feature>
<feature type="modified residue" description="Phosphoserine" evidence="1">
    <location>
        <position position="878"/>
    </location>
</feature>
<feature type="modified residue" description="Phosphoserine" evidence="35">
    <location>
        <position position="911"/>
    </location>
</feature>
<feature type="modified residue" description="Phosphoserine" evidence="35">
    <location>
        <position position="947"/>
    </location>
</feature>
<feature type="modified residue" description="Phosphoserine" evidence="35">
    <location>
        <position position="956"/>
    </location>
</feature>
<feature type="modified residue" description="Phosphoserine" evidence="30 31 32 33 34 36">
    <location>
        <position position="1017"/>
    </location>
</feature>
<feature type="modified residue" description="Phosphoserine" evidence="30 31 33 34 36">
    <location>
        <position position="1019"/>
    </location>
</feature>
<feature type="modified residue" description="Phosphoserine" evidence="35">
    <location>
        <position position="1330"/>
    </location>
</feature>
<feature type="modified residue" description="Phosphoserine" evidence="35">
    <location>
        <position position="1366"/>
    </location>
</feature>
<feature type="modified residue" description="Phosphoserine" evidence="1">
    <location>
        <position position="1489"/>
    </location>
</feature>
<feature type="modified residue" description="Phosphoserine" evidence="29">
    <location>
        <position position="1621"/>
    </location>
</feature>
<feature type="modified residue" description="Phosphoserine" evidence="35">
    <location>
        <position position="1623"/>
    </location>
</feature>
<feature type="modified residue" description="Phosphoserine" evidence="35">
    <location>
        <position position="1663"/>
    </location>
</feature>
<feature type="modified residue" description="Phosphothreonine" evidence="35">
    <location>
        <position position="2474"/>
    </location>
</feature>
<feature type="cross-link" description="Glycyl lysine isopeptide (Lys-Gly) (interchain with G-Cter in SUMO1)" evidence="37">
    <location>
        <position position="339"/>
    </location>
</feature>
<feature type="cross-link" description="Glycyl lysine isopeptide (Lys-Gly) (interchain with G-Cter in SUMO2)" evidence="39">
    <location>
        <position position="894"/>
    </location>
</feature>
<feature type="cross-link" description="Glycyl lysine isopeptide (Lys-Gly) (interchain with G-Cter in SUMO2)" evidence="39">
    <location>
        <position position="1056"/>
    </location>
</feature>
<feature type="cross-link" description="Glycyl lysine isopeptide (Lys-Gly) (interchain with G-Cter in SUMO2)" evidence="38">
    <location>
        <position position="1063"/>
    </location>
</feature>
<feature type="cross-link" description="Glycyl lysine isopeptide (Lys-Gly) (interchain with G-Cter in SUMO2)" evidence="39">
    <location>
        <position position="1340"/>
    </location>
</feature>
<feature type="cross-link" description="Glycyl lysine isopeptide (Lys-Gly) (interchain with G-Cter in SUMO2)" evidence="39">
    <location>
        <position position="1341"/>
    </location>
</feature>
<feature type="cross-link" description="Glycyl lysine isopeptide (Lys-Gly) (interchain with G-Cter in SUMO2)" evidence="39">
    <location>
        <position position="1415"/>
    </location>
</feature>
<feature type="splice variant" id="VSP_017124" description="In isoform 3." evidence="26">
    <location>
        <begin position="2367"/>
        <end position="2399"/>
    </location>
</feature>
<feature type="splice variant" id="VSP_028826" description="In isoform 4." evidence="27">
    <original>M</original>
    <variation>MQLLPRSFCVHVNHSPFFSPEPKYLHWALK</variation>
    <location>
        <position position="2429"/>
    </location>
</feature>
<feature type="sequence variant" id="VAR_018776" description="In ALS4; heterozygous; does not affect the interaction with EXOSC9 and UBE2I; does not decrease sumoylation; dbSNP:rs28941475." evidence="22">
    <original>T</original>
    <variation>I</variation>
    <location>
        <position position="3"/>
    </location>
</feature>
<feature type="sequence variant" id="VAR_036646" description="In SCAN2; dbSNP:rs997473183." evidence="9">
    <original>M</original>
    <variation>I</variation>
    <location>
        <position position="274"/>
    </location>
</feature>
<feature type="sequence variant" id="VAR_072587" description="In SCAN2; dbSNP:rs753713810." evidence="19">
    <original>M</original>
    <variation>V</variation>
    <location>
        <position position="274"/>
    </location>
</feature>
<feature type="sequence variant" id="VAR_018777" description="In SCAN2; abolishes interaction with EXOSC9; does not abolish interaction with UBE2I; decreases sumoylation; dbSNP:rs1564548971." evidence="5 22">
    <original>W</original>
    <variation>C</variation>
    <location>
        <position position="305"/>
    </location>
</feature>
<feature type="sequence variant" id="VAR_071682" description="In SCAN2; dbSNP:rs1422277504." evidence="21">
    <original>I</original>
    <variation>K</variation>
    <location>
        <position position="331"/>
    </location>
</feature>
<feature type="sequence variant" id="VAR_018778" description="In SCAN2; dbSNP:rs29001665." evidence="5">
    <original>R</original>
    <variation>W</variation>
    <location>
        <position position="332"/>
    </location>
</feature>
<feature type="sequence variant" id="VAR_018779" description="In ALS4; does not affect the interaction with EXOSC9 and UBE2I; does not decrease sumoylation and ubiquitination; does not inhibit homodimerization; unlike the wild-type protein the mutant induces interaction with SLIRP-OT1; dbSNP:rs29001584." evidence="6 22 23">
    <original>L</original>
    <variation>S</variation>
    <location>
        <position position="389"/>
    </location>
</feature>
<feature type="sequence variant" id="VAR_018780" description="In SCAN2; abolishes interaction with EXOSC9; does not abolish interaction with UBE2I; decreases sumoylation; dbSNP:rs1564547645." evidence="5 22">
    <original>P</original>
    <variation>L</variation>
    <location>
        <position position="413"/>
    </location>
</feature>
<feature type="sequence variant" id="VAR_071683" description="In SCAN2; dbSNP:rs1320071128." evidence="21">
    <original>P</original>
    <variation>L</variation>
    <location>
        <position position="496"/>
    </location>
</feature>
<feature type="sequence variant" id="VAR_036647" description="In SCAN2; associated in cis with K-653; dbSNP:rs116205032." evidence="10">
    <original>N</original>
    <variation>D</variation>
    <location>
        <position position="603"/>
    </location>
</feature>
<feature type="sequence variant" id="VAR_036648" description="In SCAN2; associated in cis with D-603; dbSNP:rs116333061." evidence="10">
    <original>Q</original>
    <variation>K</variation>
    <location>
        <position position="653"/>
    </location>
</feature>
<feature type="sequence variant" id="VAR_018781" description="In dbSNP:rs882709.">
    <original>A</original>
    <variation>G</variation>
    <location>
        <position position="660"/>
    </location>
</feature>
<feature type="sequence variant" id="VAR_071684" description="In dbSNP:rs61742937." evidence="21">
    <original>K</original>
    <variation>R</variation>
    <location>
        <position position="992"/>
    </location>
</feature>
<feature type="sequence variant" id="VAR_018782" description="In dbSNP:rs12352982.">
    <original>P</original>
    <variation>L</variation>
    <location>
        <position position="1061"/>
    </location>
</feature>
<feature type="sequence variant" id="VAR_018783" description="In dbSNP:rs3739922." evidence="5">
    <original>F</original>
    <variation>C</variation>
    <location>
        <position position="1152"/>
    </location>
</feature>
<feature type="sequence variant" id="VAR_018784" description="In dbSNP:rs1185193." evidence="7 12">
    <original>D</original>
    <variation>E</variation>
    <location>
        <position position="1192"/>
    </location>
</feature>
<feature type="sequence variant" id="VAR_056208" description="In dbSNP:rs12344006.">
    <original>K</original>
    <variation>N</variation>
    <location>
        <position position="1221"/>
    </location>
</feature>
<feature type="sequence variant" id="VAR_018785" description="In dbSNP:rs1183768." evidence="7 12">
    <original>G</original>
    <variation>R</variation>
    <location>
        <position position="1252"/>
    </location>
</feature>
<feature type="sequence variant" id="VAR_036649" description="In SCAN2; dbSNP:rs267607044." evidence="9">
    <original>R</original>
    <variation>C</variation>
    <location>
        <position position="1294"/>
    </location>
</feature>
<feature type="sequence variant" id="VAR_018786" description="In dbSNP:rs11243731.">
    <original>P</original>
    <variation>L</variation>
    <location>
        <position position="1331"/>
    </location>
</feature>
<feature type="sequence variant" id="VAR_018787" description="In dbSNP:rs543573." evidence="7 12">
    <original>I</original>
    <variation>V</variation>
    <location>
        <position position="1386"/>
    </location>
</feature>
<feature type="sequence variant" id="VAR_071685" description="In ALS4; likely benign; dbSNP:rs112089123." evidence="15">
    <original>C</original>
    <variation>G</variation>
    <location>
        <position position="1554"/>
    </location>
</feature>
<feature type="sequence variant" id="VAR_018788" description="In SCAN2; heterozygous in a British family; dbSNP:rs762175796." evidence="5">
    <original>F</original>
    <variation>S</variation>
    <location>
        <position position="1756"/>
    </location>
</feature>
<feature type="sequence variant" id="VAR_018789" description="In dbSNP:rs2296871." evidence="7">
    <original>T</original>
    <variation>A</variation>
    <location>
        <position position="1855"/>
    </location>
</feature>
<feature type="sequence variant" id="VAR_059458" description="In dbSNP:rs2296871.">
    <original>T</original>
    <variation>P</variation>
    <location>
        <position position="1855"/>
    </location>
</feature>
<feature type="sequence variant" id="VAR_072588" description="In SCAN2; dbSNP:rs121434379." evidence="19">
    <original>L</original>
    <variation>R</variation>
    <location>
        <position position="1976"/>
    </location>
</feature>
<feature type="sequence variant" id="VAR_071686" description="In ALS4; dbSNP:rs746525639." evidence="15">
    <original>K</original>
    <variation>E</variation>
    <location>
        <position position="2029"/>
    </location>
</feature>
<feature type="sequence variant" id="VAR_018790" description="In ALS4; dbSNP:rs121434378." evidence="6">
    <original>R</original>
    <variation>H</variation>
    <location>
        <position position="2136"/>
    </location>
</feature>
<feature type="sequence variant" id="VAR_018791" description="In SCAN2; dbSNP:rs28940290." evidence="5">
    <original>P</original>
    <variation>L</variation>
    <location>
        <position position="2213"/>
    </location>
</feature>
<feature type="sequence variant" id="VAR_071687" description="In SCAN2; dbSNP:rs1471824334." evidence="21">
    <original>M</original>
    <variation>T</variation>
    <location>
        <position position="2229"/>
    </location>
</feature>
<feature type="sequence variant" id="VAR_036650" description="In SCAN2; dbSNP:rs1420833435." evidence="8">
    <original>P</original>
    <variation>R</variation>
    <location>
        <position position="2368"/>
    </location>
</feature>
<feature type="sequence variant" id="VAR_071688" description="In ALS4; dbSNP:rs151117904." evidence="15">
    <original>I</original>
    <variation>T</variation>
    <location>
        <position position="2547"/>
    </location>
</feature>
<feature type="sequence variant" id="VAR_018792" description="In dbSNP:rs1056899." evidence="4 7 12">
    <original>I</original>
    <variation>V</variation>
    <location>
        <position position="2587"/>
    </location>
</feature>
<feature type="sequence variant" id="VAR_018793" description="In dbSNP:rs3739927." evidence="7">
    <original>S</original>
    <variation>G</variation>
    <location>
        <position position="2612"/>
    </location>
</feature>
<feature type="mutagenesis site" description="Abolishes interaction with EXOSC9 and UBE2I and decreases sumoylation." evidence="22">
    <original>E</original>
    <variation>K</variation>
    <location>
        <position position="65"/>
    </location>
</feature>
<feature type="sequence conflict" description="In Ref. 2; CAD98045." evidence="27" ref="2">
    <original>L</original>
    <variation>S</variation>
    <location>
        <position position="657"/>
    </location>
</feature>
<feature type="sequence conflict" description="In Ref. 2; CAD97857." evidence="27" ref="2">
    <original>E</original>
    <variation>G</variation>
    <location>
        <position position="866"/>
    </location>
</feature>
<feature type="sequence conflict" description="In Ref. 2; CAH18105." evidence="27" ref="2">
    <original>K</original>
    <variation>E</variation>
    <location>
        <position position="894"/>
    </location>
</feature>
<feature type="sequence conflict" description="In Ref. 2; CAD98045 and 5; BAA31600." evidence="27" ref="2 5">
    <original>E</original>
    <variation>G</variation>
    <location>
        <position position="895"/>
    </location>
</feature>
<feature type="sequence conflict" description="In Ref. 2; CAD97857." evidence="27" ref="2">
    <original>P</original>
    <variation>T</variation>
    <location>
        <position position="977"/>
    </location>
</feature>
<feature type="sequence conflict" description="In Ref. 2; CAD97857." evidence="27" ref="2">
    <original>F</original>
    <variation>C</variation>
    <location>
        <position position="1073"/>
    </location>
</feature>
<feature type="sequence conflict" description="In Ref. 5; BAA31600." evidence="27" ref="5">
    <original>Q</original>
    <variation>E</variation>
    <location>
        <position position="1276"/>
    </location>
</feature>
<feature type="sequence conflict" description="In Ref. 2; CAH18105." evidence="27" ref="2">
    <original>R</original>
    <variation>G</variation>
    <location>
        <position position="1593"/>
    </location>
</feature>
<feature type="sequence conflict" description="In Ref. 2; CAD97857." evidence="27" ref="2">
    <original>N</original>
    <variation>K</variation>
    <location>
        <position position="1626"/>
    </location>
</feature>
<feature type="sequence conflict" description="In Ref. 2; CAH18105." evidence="27" ref="2">
    <original>I</original>
    <variation>V</variation>
    <location>
        <position position="1634"/>
    </location>
</feature>
<feature type="sequence conflict" description="In Ref. 4; AAH32622." evidence="27" ref="4">
    <original>PVG</original>
    <variation>TRP</variation>
    <location>
        <begin position="1648"/>
        <end position="1650"/>
    </location>
</feature>
<feature type="sequence conflict" description="In Ref. 2; CAD97857." evidence="27" ref="2">
    <original>L</original>
    <variation>P</variation>
    <location>
        <position position="1725"/>
    </location>
</feature>
<feature type="sequence conflict" description="In Ref. 2; CAD98045 and 4; AAH32600/AAH32622." evidence="27" ref="2 4">
    <original>E</original>
    <variation>K</variation>
    <location>
        <position position="1826"/>
    </location>
</feature>
<feature type="sequence conflict" description="In Ref. 1; AAR13367 and 4; AAH32622." evidence="27" ref="1 4">
    <original>F</original>
    <variation>L</variation>
    <location>
        <position position="1867"/>
    </location>
</feature>
<feature type="sequence conflict" description="In Ref. 2; CAD97857." evidence="27" ref="2">
    <original>Q</original>
    <variation>L</variation>
    <location>
        <position position="2078"/>
    </location>
</feature>
<feature type="sequence conflict" description="In Ref. 6; BAB14299." evidence="27" ref="6">
    <original>M</original>
    <variation>E</variation>
    <location>
        <position position="2324"/>
    </location>
</feature>
<feature type="sequence conflict" description="In Ref. 2; CAH18105." evidence="27" ref="2">
    <original>G</original>
    <variation>E</variation>
    <location>
        <position position="2423"/>
    </location>
</feature>
<feature type="sequence conflict" description="In Ref. 2; CAH18105." evidence="27" ref="2">
    <original>D</original>
    <variation>G</variation>
    <location>
        <position position="2458"/>
    </location>
</feature>
<feature type="sequence conflict" description="In Ref. 2; CAD97857." evidence="27" ref="2">
    <original>P</original>
    <variation>S</variation>
    <location>
        <position position="2539"/>
    </location>
</feature>
<feature type="sequence conflict" description="In Ref. 2; CAD97857." evidence="27" ref="2">
    <original>H</original>
    <variation>R</variation>
    <location>
        <position position="2565"/>
    </location>
</feature>
<feature type="sequence conflict" description="In Ref. 6; BAB14299." evidence="27" ref="6">
    <original>F</original>
    <variation>L</variation>
    <location>
        <position position="2577"/>
    </location>
</feature>
<dbReference type="EC" id="3.6.4.-"/>
<dbReference type="EMBL" id="AY362728">
    <property type="protein sequence ID" value="AAR13367.1"/>
    <property type="molecule type" value="mRNA"/>
</dbReference>
<dbReference type="EMBL" id="BX537849">
    <property type="protein sequence ID" value="CAD97857.1"/>
    <property type="status" value="ALT_FRAME"/>
    <property type="molecule type" value="mRNA"/>
</dbReference>
<dbReference type="EMBL" id="BX538166">
    <property type="protein sequence ID" value="CAD98045.1"/>
    <property type="molecule type" value="mRNA"/>
</dbReference>
<dbReference type="EMBL" id="CR749249">
    <property type="protein sequence ID" value="CAH18105.1"/>
    <property type="molecule type" value="mRNA"/>
</dbReference>
<dbReference type="EMBL" id="AL159997">
    <property type="status" value="NOT_ANNOTATED_CDS"/>
    <property type="molecule type" value="Genomic_DNA"/>
</dbReference>
<dbReference type="EMBL" id="AL353701">
    <property type="status" value="NOT_ANNOTATED_CDS"/>
    <property type="molecule type" value="Genomic_DNA"/>
</dbReference>
<dbReference type="EMBL" id="BC032600">
    <property type="protein sequence ID" value="AAH32600.2"/>
    <property type="molecule type" value="mRNA"/>
</dbReference>
<dbReference type="EMBL" id="BC032622">
    <property type="protein sequence ID" value="AAH32622.2"/>
    <property type="molecule type" value="mRNA"/>
</dbReference>
<dbReference type="EMBL" id="BC078166">
    <property type="protein sequence ID" value="AAH78166.1"/>
    <property type="molecule type" value="mRNA"/>
</dbReference>
<dbReference type="EMBL" id="BC106017">
    <property type="protein sequence ID" value="AAI06018.1"/>
    <property type="molecule type" value="mRNA"/>
</dbReference>
<dbReference type="EMBL" id="BC137350">
    <property type="protein sequence ID" value="AAI37351.1"/>
    <property type="molecule type" value="mRNA"/>
</dbReference>
<dbReference type="EMBL" id="AB014525">
    <property type="protein sequence ID" value="BAA31600.2"/>
    <property type="molecule type" value="mRNA"/>
</dbReference>
<dbReference type="EMBL" id="AK001456">
    <property type="protein sequence ID" value="BAA91701.1"/>
    <property type="status" value="ALT_INIT"/>
    <property type="molecule type" value="mRNA"/>
</dbReference>
<dbReference type="EMBL" id="AK022902">
    <property type="protein sequence ID" value="BAB14299.1"/>
    <property type="status" value="ALT_INIT"/>
    <property type="molecule type" value="mRNA"/>
</dbReference>
<dbReference type="CCDS" id="CCDS6947.1">
    <molecule id="Q7Z333-1"/>
</dbReference>
<dbReference type="RefSeq" id="NP_001338456.1">
    <molecule id="Q7Z333-1"/>
    <property type="nucleotide sequence ID" value="NM_001351527.2"/>
</dbReference>
<dbReference type="RefSeq" id="NP_001338457.1">
    <molecule id="Q7Z333-4"/>
    <property type="nucleotide sequence ID" value="NM_001351528.2"/>
</dbReference>
<dbReference type="RefSeq" id="NP_055861.3">
    <molecule id="Q7Z333-1"/>
    <property type="nucleotide sequence ID" value="NM_015046.5"/>
</dbReference>
<dbReference type="RefSeq" id="XP_005272228.1">
    <property type="nucleotide sequence ID" value="XM_005272171.1"/>
</dbReference>
<dbReference type="RefSeq" id="XP_005272229.1">
    <molecule id="Q7Z333-4"/>
    <property type="nucleotide sequence ID" value="XM_005272172.4"/>
</dbReference>
<dbReference type="RefSeq" id="XP_005272230.1">
    <molecule id="Q7Z333-4"/>
    <property type="nucleotide sequence ID" value="XM_005272173.4"/>
</dbReference>
<dbReference type="RefSeq" id="XP_011516706.1">
    <molecule id="Q7Z333-4"/>
    <property type="nucleotide sequence ID" value="XM_011518404.4"/>
</dbReference>
<dbReference type="RefSeq" id="XP_011516707.1">
    <molecule id="Q7Z333-4"/>
    <property type="nucleotide sequence ID" value="XM_011518405.4"/>
</dbReference>
<dbReference type="RefSeq" id="XP_016869984.1">
    <property type="nucleotide sequence ID" value="XM_017014495.1"/>
</dbReference>
<dbReference type="RefSeq" id="XP_016869986.1">
    <property type="nucleotide sequence ID" value="XM_017014497.1"/>
</dbReference>
<dbReference type="RefSeq" id="XP_047278979.1">
    <molecule id="Q7Z333-1"/>
    <property type="nucleotide sequence ID" value="XM_047423023.1"/>
</dbReference>
<dbReference type="SMR" id="Q7Z333"/>
<dbReference type="BioGRID" id="116699">
    <property type="interactions" value="204"/>
</dbReference>
<dbReference type="DIP" id="DIP-38360N"/>
<dbReference type="ELM" id="Q7Z333"/>
<dbReference type="FunCoup" id="Q7Z333">
    <property type="interactions" value="2760"/>
</dbReference>
<dbReference type="IntAct" id="Q7Z333">
    <property type="interactions" value="139"/>
</dbReference>
<dbReference type="MINT" id="Q7Z333"/>
<dbReference type="STRING" id="9606.ENSP00000224140"/>
<dbReference type="GlyCosmos" id="Q7Z333">
    <property type="glycosylation" value="1 site, 1 glycan"/>
</dbReference>
<dbReference type="GlyGen" id="Q7Z333">
    <property type="glycosylation" value="4 sites, 1 N-linked glycan (1 site), 1 O-linked glycan (2 sites)"/>
</dbReference>
<dbReference type="iPTMnet" id="Q7Z333"/>
<dbReference type="PhosphoSitePlus" id="Q7Z333"/>
<dbReference type="BioMuta" id="SETX"/>
<dbReference type="DMDM" id="296453021"/>
<dbReference type="jPOST" id="Q7Z333"/>
<dbReference type="MassIVE" id="Q7Z333"/>
<dbReference type="PaxDb" id="9606-ENSP00000224140"/>
<dbReference type="PeptideAtlas" id="Q7Z333"/>
<dbReference type="ProteomicsDB" id="69001">
    <molecule id="Q7Z333-1"/>
</dbReference>
<dbReference type="ProteomicsDB" id="69002">
    <molecule id="Q7Z333-3"/>
</dbReference>
<dbReference type="ProteomicsDB" id="69003">
    <molecule id="Q7Z333-4"/>
</dbReference>
<dbReference type="Pumba" id="Q7Z333"/>
<dbReference type="Antibodypedia" id="31672">
    <property type="antibodies" value="363 antibodies from 22 providers"/>
</dbReference>
<dbReference type="DNASU" id="23064"/>
<dbReference type="Ensembl" id="ENST00000224140.6">
    <molecule id="Q7Z333-1"/>
    <property type="protein sequence ID" value="ENSP00000224140.5"/>
    <property type="gene ID" value="ENSG00000107290.14"/>
</dbReference>
<dbReference type="GeneID" id="23064"/>
<dbReference type="KEGG" id="hsa:23064"/>
<dbReference type="MANE-Select" id="ENST00000224140.6">
    <property type="protein sequence ID" value="ENSP00000224140.5"/>
    <property type="RefSeq nucleotide sequence ID" value="NM_015046.7"/>
    <property type="RefSeq protein sequence ID" value="NP_055861.3"/>
</dbReference>
<dbReference type="UCSC" id="uc004cbk.4">
    <molecule id="Q7Z333-1"/>
    <property type="organism name" value="human"/>
</dbReference>
<dbReference type="AGR" id="HGNC:445"/>
<dbReference type="CTD" id="23064"/>
<dbReference type="DisGeNET" id="23064"/>
<dbReference type="GeneCards" id="SETX"/>
<dbReference type="GeneReviews" id="SETX"/>
<dbReference type="HGNC" id="HGNC:445">
    <property type="gene designation" value="SETX"/>
</dbReference>
<dbReference type="HPA" id="ENSG00000107290">
    <property type="expression patterns" value="Low tissue specificity"/>
</dbReference>
<dbReference type="MalaCards" id="SETX"/>
<dbReference type="MIM" id="602433">
    <property type="type" value="phenotype"/>
</dbReference>
<dbReference type="MIM" id="606002">
    <property type="type" value="phenotype"/>
</dbReference>
<dbReference type="MIM" id="608465">
    <property type="type" value="gene"/>
</dbReference>
<dbReference type="neXtProt" id="NX_Q7Z333"/>
<dbReference type="OpenTargets" id="ENSG00000107290"/>
<dbReference type="Orphanet" id="357043">
    <property type="disease" value="Amyotrophic lateral sclerosis type 4"/>
</dbReference>
<dbReference type="Orphanet" id="64753">
    <property type="disease" value="Spinocerebellar ataxia with axonal neuropathy type 2"/>
</dbReference>
<dbReference type="PharmGKB" id="PA24751"/>
<dbReference type="VEuPathDB" id="HostDB:ENSG00000107290"/>
<dbReference type="eggNOG" id="KOG1801">
    <property type="taxonomic scope" value="Eukaryota"/>
</dbReference>
<dbReference type="GeneTree" id="ENSGT00940000160918"/>
<dbReference type="HOGENOM" id="CLU_000967_0_0_1"/>
<dbReference type="InParanoid" id="Q7Z333"/>
<dbReference type="OMA" id="NIFFPLM"/>
<dbReference type="OrthoDB" id="6513042at2759"/>
<dbReference type="PAN-GO" id="Q7Z333">
    <property type="GO annotations" value="4 GO annotations based on evolutionary models"/>
</dbReference>
<dbReference type="PhylomeDB" id="Q7Z333"/>
<dbReference type="TreeFam" id="TF324634"/>
<dbReference type="PathwayCommons" id="Q7Z333"/>
<dbReference type="SignaLink" id="Q7Z333"/>
<dbReference type="BioGRID-ORCS" id="23064">
    <property type="hits" value="23 hits in 1160 CRISPR screens"/>
</dbReference>
<dbReference type="ChiTaRS" id="SETX">
    <property type="organism name" value="human"/>
</dbReference>
<dbReference type="GeneWiki" id="SETX"/>
<dbReference type="GenomeRNAi" id="23064"/>
<dbReference type="Pharos" id="Q7Z333">
    <property type="development level" value="Tbio"/>
</dbReference>
<dbReference type="PRO" id="PR:Q7Z333"/>
<dbReference type="Proteomes" id="UP000005640">
    <property type="component" value="Chromosome 9"/>
</dbReference>
<dbReference type="RNAct" id="Q7Z333">
    <property type="molecule type" value="protein"/>
</dbReference>
<dbReference type="Bgee" id="ENSG00000107290">
    <property type="expression patterns" value="Expressed in right testis and 186 other cell types or tissues"/>
</dbReference>
<dbReference type="ExpressionAtlas" id="Q7Z333">
    <property type="expression patterns" value="baseline and differential"/>
</dbReference>
<dbReference type="GO" id="GO:0030424">
    <property type="term" value="C:axon"/>
    <property type="evidence" value="ECO:0000314"/>
    <property type="project" value="UniProtKB"/>
</dbReference>
<dbReference type="GO" id="GO:0000781">
    <property type="term" value="C:chromosome, telomeric region"/>
    <property type="evidence" value="ECO:0007669"/>
    <property type="project" value="UniProtKB-SubCell"/>
</dbReference>
<dbReference type="GO" id="GO:0005737">
    <property type="term" value="C:cytoplasm"/>
    <property type="evidence" value="ECO:0000314"/>
    <property type="project" value="UniProtKB"/>
</dbReference>
<dbReference type="GO" id="GO:0030426">
    <property type="term" value="C:growth cone"/>
    <property type="evidence" value="ECO:0000314"/>
    <property type="project" value="UniProtKB"/>
</dbReference>
<dbReference type="GO" id="GO:0045171">
    <property type="term" value="C:intercellular bridge"/>
    <property type="evidence" value="ECO:0000314"/>
    <property type="project" value="HPA"/>
</dbReference>
<dbReference type="GO" id="GO:0016604">
    <property type="term" value="C:nuclear body"/>
    <property type="evidence" value="ECO:0000314"/>
    <property type="project" value="HPA"/>
</dbReference>
<dbReference type="GO" id="GO:0000228">
    <property type="term" value="C:nuclear chromosome"/>
    <property type="evidence" value="ECO:0000314"/>
    <property type="project" value="UniProtKB"/>
</dbReference>
<dbReference type="GO" id="GO:0005730">
    <property type="term" value="C:nucleolus"/>
    <property type="evidence" value="ECO:0007669"/>
    <property type="project" value="UniProtKB-SubCell"/>
</dbReference>
<dbReference type="GO" id="GO:0005654">
    <property type="term" value="C:nucleoplasm"/>
    <property type="evidence" value="ECO:0000314"/>
    <property type="project" value="HPA"/>
</dbReference>
<dbReference type="GO" id="GO:0005634">
    <property type="term" value="C:nucleus"/>
    <property type="evidence" value="ECO:0000314"/>
    <property type="project" value="UniProtKB"/>
</dbReference>
<dbReference type="GO" id="GO:0005524">
    <property type="term" value="F:ATP binding"/>
    <property type="evidence" value="ECO:0007669"/>
    <property type="project" value="UniProtKB-KW"/>
</dbReference>
<dbReference type="GO" id="GO:0003677">
    <property type="term" value="F:DNA binding"/>
    <property type="evidence" value="ECO:0000305"/>
    <property type="project" value="UniProtKB"/>
</dbReference>
<dbReference type="GO" id="GO:0003678">
    <property type="term" value="F:DNA helicase activity"/>
    <property type="evidence" value="ECO:0000304"/>
    <property type="project" value="UniProtKB"/>
</dbReference>
<dbReference type="GO" id="GO:0016787">
    <property type="term" value="F:hydrolase activity"/>
    <property type="evidence" value="ECO:0007669"/>
    <property type="project" value="UniProtKB-KW"/>
</dbReference>
<dbReference type="GO" id="GO:0042802">
    <property type="term" value="F:identical protein binding"/>
    <property type="evidence" value="ECO:0000353"/>
    <property type="project" value="IntAct"/>
</dbReference>
<dbReference type="GO" id="GO:0003723">
    <property type="term" value="F:RNA binding"/>
    <property type="evidence" value="ECO:0000318"/>
    <property type="project" value="GO_Central"/>
</dbReference>
<dbReference type="GO" id="GO:0001147">
    <property type="term" value="F:transcription termination site sequence-specific DNA binding"/>
    <property type="evidence" value="ECO:0000314"/>
    <property type="project" value="UniProtKB"/>
</dbReference>
<dbReference type="GO" id="GO:0030154">
    <property type="term" value="P:cell differentiation"/>
    <property type="evidence" value="ECO:0007669"/>
    <property type="project" value="UniProtKB-KW"/>
</dbReference>
<dbReference type="GO" id="GO:0070301">
    <property type="term" value="P:cellular response to hydrogen peroxide"/>
    <property type="evidence" value="ECO:0000314"/>
    <property type="project" value="UniProtKB"/>
</dbReference>
<dbReference type="GO" id="GO:0034599">
    <property type="term" value="P:cellular response to oxidative stress"/>
    <property type="evidence" value="ECO:0000314"/>
    <property type="project" value="UniProtKB"/>
</dbReference>
<dbReference type="GO" id="GO:0007623">
    <property type="term" value="P:circadian rhythm"/>
    <property type="evidence" value="ECO:0007669"/>
    <property type="project" value="Ensembl"/>
</dbReference>
<dbReference type="GO" id="GO:0006974">
    <property type="term" value="P:DNA damage response"/>
    <property type="evidence" value="ECO:0000314"/>
    <property type="project" value="UniProtKB"/>
</dbReference>
<dbReference type="GO" id="GO:0006310">
    <property type="term" value="P:DNA recombination"/>
    <property type="evidence" value="ECO:0007669"/>
    <property type="project" value="UniProtKB-KW"/>
</dbReference>
<dbReference type="GO" id="GO:0006353">
    <property type="term" value="P:DNA-templated transcription termination"/>
    <property type="evidence" value="ECO:0000315"/>
    <property type="project" value="UniProtKB"/>
</dbReference>
<dbReference type="GO" id="GO:0006302">
    <property type="term" value="P:double-strand break repair"/>
    <property type="evidence" value="ECO:0000314"/>
    <property type="project" value="UniProtKB"/>
</dbReference>
<dbReference type="GO" id="GO:0006376">
    <property type="term" value="P:mRNA splice site recognition"/>
    <property type="evidence" value="ECO:0000315"/>
    <property type="project" value="UniProtKB"/>
</dbReference>
<dbReference type="GO" id="GO:0007399">
    <property type="term" value="P:nervous system development"/>
    <property type="evidence" value="ECO:0007669"/>
    <property type="project" value="UniProtKB-KW"/>
</dbReference>
<dbReference type="GO" id="GO:2000144">
    <property type="term" value="P:positive regulation of DNA-templated transcription initiation"/>
    <property type="evidence" value="ECO:0000315"/>
    <property type="project" value="UniProtKB"/>
</dbReference>
<dbReference type="GO" id="GO:0010976">
    <property type="term" value="P:positive regulation of neuron projection development"/>
    <property type="evidence" value="ECO:0000314"/>
    <property type="project" value="UniProtKB"/>
</dbReference>
<dbReference type="GO" id="GO:0033120">
    <property type="term" value="P:positive regulation of RNA splicing"/>
    <property type="evidence" value="ECO:0000315"/>
    <property type="project" value="UniProtKB"/>
</dbReference>
<dbReference type="GO" id="GO:0060566">
    <property type="term" value="P:positive regulation of termination of DNA-templated transcription"/>
    <property type="evidence" value="ECO:0000315"/>
    <property type="project" value="UniProtKB"/>
</dbReference>
<dbReference type="GO" id="GO:2000806">
    <property type="term" value="P:positive regulation of termination of RNA polymerase II transcription, poly(A)-coupled"/>
    <property type="evidence" value="ECO:0000315"/>
    <property type="project" value="UniProtKB"/>
</dbReference>
<dbReference type="GO" id="GO:0045944">
    <property type="term" value="P:positive regulation of transcription by RNA polymerase II"/>
    <property type="evidence" value="ECO:0000315"/>
    <property type="project" value="UniProtKB"/>
</dbReference>
<dbReference type="GO" id="GO:0006396">
    <property type="term" value="P:RNA processing"/>
    <property type="evidence" value="ECO:0000304"/>
    <property type="project" value="UniProtKB"/>
</dbReference>
<dbReference type="GO" id="GO:0007283">
    <property type="term" value="P:spermatogenesis"/>
    <property type="evidence" value="ECO:0007669"/>
    <property type="project" value="UniProtKB-KW"/>
</dbReference>
<dbReference type="GO" id="GO:0006369">
    <property type="term" value="P:termination of RNA polymerase II transcription"/>
    <property type="evidence" value="ECO:0000318"/>
    <property type="project" value="GO_Central"/>
</dbReference>
<dbReference type="CDD" id="cd18042">
    <property type="entry name" value="DEXXQc_SETX"/>
    <property type="match status" value="1"/>
</dbReference>
<dbReference type="CDD" id="cd18808">
    <property type="entry name" value="SF1_C_Upf1"/>
    <property type="match status" value="1"/>
</dbReference>
<dbReference type="FunFam" id="3.40.50.300:FF:000798">
    <property type="entry name" value="Probable helicase senataxin"/>
    <property type="match status" value="1"/>
</dbReference>
<dbReference type="FunFam" id="3.40.50.300:FF:000810">
    <property type="entry name" value="probable helicase senataxin"/>
    <property type="match status" value="1"/>
</dbReference>
<dbReference type="Gene3D" id="3.40.50.300">
    <property type="entry name" value="P-loop containing nucleotide triphosphate hydrolases"/>
    <property type="match status" value="2"/>
</dbReference>
<dbReference type="InterPro" id="IPR045055">
    <property type="entry name" value="DNA2/NAM7-like"/>
</dbReference>
<dbReference type="InterPro" id="IPR041679">
    <property type="entry name" value="DNA2/NAM7-like_C"/>
</dbReference>
<dbReference type="InterPro" id="IPR041677">
    <property type="entry name" value="DNA2/NAM7_AAA_11"/>
</dbReference>
<dbReference type="InterPro" id="IPR027417">
    <property type="entry name" value="P-loop_NTPase"/>
</dbReference>
<dbReference type="InterPro" id="IPR047187">
    <property type="entry name" value="SF1_C_Upf1"/>
</dbReference>
<dbReference type="PANTHER" id="PTHR10887">
    <property type="entry name" value="DNA2/NAM7 HELICASE FAMILY"/>
    <property type="match status" value="1"/>
</dbReference>
<dbReference type="PANTHER" id="PTHR10887:SF537">
    <property type="entry name" value="HELICASE SENATAXIN-RELATED"/>
    <property type="match status" value="1"/>
</dbReference>
<dbReference type="Pfam" id="PF13086">
    <property type="entry name" value="AAA_11"/>
    <property type="match status" value="1"/>
</dbReference>
<dbReference type="Pfam" id="PF13087">
    <property type="entry name" value="AAA_12"/>
    <property type="match status" value="1"/>
</dbReference>
<dbReference type="SUPFAM" id="SSF52540">
    <property type="entry name" value="P-loop containing nucleoside triphosphate hydrolases"/>
    <property type="match status" value="1"/>
</dbReference>
<gene>
    <name evidence="25 28" type="primary">SETX</name>
    <name type="synonym">ALS4</name>
    <name type="synonym">KIAA0625</name>
    <name type="synonym">SCAR1</name>
</gene>
<protein>
    <recommendedName>
        <fullName evidence="27">Probable helicase senataxin</fullName>
        <ecNumber>3.6.4.-</ecNumber>
    </recommendedName>
    <alternativeName>
        <fullName>Amyotrophic lateral sclerosis 4 protein</fullName>
    </alternativeName>
    <alternativeName>
        <fullName evidence="27">SEN1 homolog</fullName>
    </alternativeName>
    <alternativeName>
        <fullName evidence="25 28">Senataxin</fullName>
    </alternativeName>
</protein>
<keyword id="KW-0025">Alternative splicing</keyword>
<keyword id="KW-0036">Amyotrophic lateral sclerosis</keyword>
<keyword id="KW-0067">ATP-binding</keyword>
<keyword id="KW-0090">Biological rhythms</keyword>
<keyword id="KW-0966">Cell projection</keyword>
<keyword id="KW-0158">Chromosome</keyword>
<keyword id="KW-0175">Coiled coil</keyword>
<keyword id="KW-0963">Cytoplasm</keyword>
<keyword id="KW-0221">Differentiation</keyword>
<keyword id="KW-0225">Disease variant</keyword>
<keyword id="KW-0227">DNA damage</keyword>
<keyword id="KW-0233">DNA recombination</keyword>
<keyword id="KW-0234">DNA repair</keyword>
<keyword id="KW-0347">Helicase</keyword>
<keyword id="KW-0378">Hydrolase</keyword>
<keyword id="KW-1017">Isopeptide bond</keyword>
<keyword id="KW-0523">Neurodegeneration</keyword>
<keyword id="KW-0524">Neurogenesis</keyword>
<keyword id="KW-0547">Nucleotide-binding</keyword>
<keyword id="KW-0539">Nucleus</keyword>
<keyword id="KW-0597">Phosphoprotein</keyword>
<keyword id="KW-1267">Proteomics identification</keyword>
<keyword id="KW-1185">Reference proteome</keyword>
<keyword id="KW-0744">Spermatogenesis</keyword>
<keyword id="KW-0779">Telomere</keyword>
<keyword id="KW-0832">Ubl conjugation</keyword>
<name>SETX_HUMAN</name>
<evidence type="ECO:0000250" key="1">
    <source>
        <dbReference type="UniProtKB" id="A2AKX3"/>
    </source>
</evidence>
<evidence type="ECO:0000255" key="2"/>
<evidence type="ECO:0000256" key="3">
    <source>
        <dbReference type="SAM" id="MobiDB-lite"/>
    </source>
</evidence>
<evidence type="ECO:0000269" key="4">
    <source>
    </source>
</evidence>
<evidence type="ECO:0000269" key="5">
    <source>
    </source>
</evidence>
<evidence type="ECO:0000269" key="6">
    <source>
    </source>
</evidence>
<evidence type="ECO:0000269" key="7">
    <source>
    </source>
</evidence>
<evidence type="ECO:0000269" key="8">
    <source>
    </source>
</evidence>
<evidence type="ECO:0000269" key="9">
    <source>
    </source>
</evidence>
<evidence type="ECO:0000269" key="10">
    <source>
    </source>
</evidence>
<evidence type="ECO:0000269" key="11">
    <source>
    </source>
</evidence>
<evidence type="ECO:0000269" key="12">
    <source>
    </source>
</evidence>
<evidence type="ECO:0000269" key="13">
    <source>
    </source>
</evidence>
<evidence type="ECO:0000269" key="14">
    <source>
    </source>
</evidence>
<evidence type="ECO:0000269" key="15">
    <source>
    </source>
</evidence>
<evidence type="ECO:0000269" key="16">
    <source>
    </source>
</evidence>
<evidence type="ECO:0000269" key="17">
    <source>
    </source>
</evidence>
<evidence type="ECO:0000269" key="18">
    <source>
    </source>
</evidence>
<evidence type="ECO:0000269" key="19">
    <source>
    </source>
</evidence>
<evidence type="ECO:0000269" key="20">
    <source>
    </source>
</evidence>
<evidence type="ECO:0000269" key="21">
    <source>
    </source>
</evidence>
<evidence type="ECO:0000269" key="22">
    <source>
    </source>
</evidence>
<evidence type="ECO:0000269" key="23">
    <source>
    </source>
</evidence>
<evidence type="ECO:0000269" key="24">
    <source>
    </source>
</evidence>
<evidence type="ECO:0000303" key="25">
    <source>
    </source>
</evidence>
<evidence type="ECO:0000303" key="26">
    <source>
    </source>
</evidence>
<evidence type="ECO:0000305" key="27"/>
<evidence type="ECO:0000312" key="28">
    <source>
        <dbReference type="HGNC" id="HGNC:445"/>
    </source>
</evidence>
<evidence type="ECO:0007744" key="29">
    <source>
    </source>
</evidence>
<evidence type="ECO:0007744" key="30">
    <source>
    </source>
</evidence>
<evidence type="ECO:0007744" key="31">
    <source>
    </source>
</evidence>
<evidence type="ECO:0007744" key="32">
    <source>
    </source>
</evidence>
<evidence type="ECO:0007744" key="33">
    <source>
    </source>
</evidence>
<evidence type="ECO:0007744" key="34">
    <source>
    </source>
</evidence>
<evidence type="ECO:0007744" key="35">
    <source>
    </source>
</evidence>
<evidence type="ECO:0007744" key="36">
    <source>
    </source>
</evidence>
<evidence type="ECO:0007744" key="37">
    <source>
    </source>
</evidence>
<evidence type="ECO:0007744" key="38">
    <source>
    </source>
</evidence>
<evidence type="ECO:0007744" key="39">
    <source>
    </source>
</evidence>
<proteinExistence type="evidence at protein level"/>
<comment type="function">
    <text evidence="1 11 13 14 16 17 22 24">Probable RNA/DNA helicase involved in diverse aspects of RNA metabolism and genomic integrity. Plays a role in transcription regulation by its ability to modulate RNA Polymerase II (Pol II) binding to chromatin and through its interaction with proteins involved in transcription (PubMed:19515850, PubMed:21700224). Contributes to the mRNA splicing efficiency and splice site selection (PubMed:19515850). Required for the resolution of R-loop RNA-DNA hybrid formation at G-rich pause sites located downstream of the poly(A) site, allowing XRN2 recruitment and XRN2-mediated degradation of the downstream cleaved RNA and hence efficient RNA polymerase II (RNAp II) transcription termination (PubMed:19515850, PubMed:21700224, PubMed:26700805). Required for the 3' transcriptional termination of PER1 and CRY2, thus playing an important role in the circadian rhythm regulation (By similarity). Involved in DNA double-strand breaks damage response generated by oxidative stress (PubMed:17562789). In association with RRP45, targets the RNA exosome complex to sites of transcription-induced DNA damage (PubMed:24105744). Plays a role in the development and maturation of germ cells: essential for male meiosis, acting at the interface of transcription and meiotic recombination, and in the process of gene silencing during meiotic sex chromosome inactivation (MSCI) (By similarity). May be involved in telomeric stability through the regulation of telomere repeat-containing RNA (TERRA) transcription (PubMed:21112256). Plays a role in neurite outgrowth in hippocampal cells through FGF8-activated signaling pathways. Inhibits retinoic acid-induced apoptosis (PubMed:21576111).</text>
</comment>
<comment type="subunit">
    <text evidence="1 13 18 22 24">Homodimer (PubMed:24244371). Interacts with PER2; the interaction inhibits termination of circadian target genes (By similarity). Interacts with CHD4, POLR2A, PRKDC and TRIM28 (PubMed:23149945). Interacts with UBE2I (PubMed:24105744). Interacts (via N-terminus domain) with EXOSC9 (via C-terminus region); the interaction enhances SETX sumoylation (PubMed:24105744). Interacts with NCL (via N-terminus domain) (PubMed:19515850). Interacts with PABPN1, PABPC1 and SF3B1 (PubMed:19515850). Interacts with SMN1/SMN2 and POLR2A; SMN1/SMN2 recruits SETX to POLR2A (PubMed:19515850, PubMed:26700805).</text>
</comment>
<comment type="interaction">
    <interactant intactId="EBI-1220123">
        <id>Q7Z333</id>
    </interactant>
    <interactant intactId="EBI-295301">
        <id>P24928</id>
        <label>POLR2A</label>
    </interactant>
    <organismsDiffer>false</organismsDiffer>
    <experiments>7</experiments>
</comment>
<comment type="interaction">
    <interactant intactId="EBI-1220123">
        <id>Q7Z333</id>
    </interactant>
    <interactant intactId="EBI-11528848">
        <id>Q8N6K7-2</id>
        <label>SAMD3</label>
    </interactant>
    <organismsDiffer>false</organismsDiffer>
    <experiments>3</experiments>
</comment>
<comment type="interaction">
    <interactant intactId="EBI-1220123">
        <id>Q7Z333</id>
    </interactant>
    <interactant intactId="EBI-1220123">
        <id>Q7Z333</id>
        <label>SETX</label>
    </interactant>
    <organismsDiffer>false</organismsDiffer>
    <experiments>4</experiments>
</comment>
<comment type="interaction">
    <interactant intactId="EBI-1220123">
        <id>Q7Z333</id>
    </interactant>
    <interactant intactId="EBI-358545">
        <id>Q9GZS3</id>
        <label>SKIC8</label>
    </interactant>
    <organismsDiffer>false</organismsDiffer>
    <experiments>3</experiments>
</comment>
<comment type="interaction">
    <interactant intactId="EBI-1220123">
        <id>Q7Z333</id>
    </interactant>
    <interactant intactId="EBI-395421">
        <id>Q16637</id>
        <label>SMN2</label>
    </interactant>
    <organismsDiffer>false</organismsDiffer>
    <experiments>3</experiments>
</comment>
<comment type="interaction">
    <interactant intactId="EBI-1220123">
        <id>Q7Z333</id>
    </interactant>
    <interactant intactId="EBI-80168">
        <id>P63279</id>
        <label>UBE2I</label>
    </interactant>
    <organismsDiffer>false</organismsDiffer>
    <experiments>3</experiments>
</comment>
<comment type="interaction">
    <interactant intactId="EBI-1220123">
        <id>Q7Z333</id>
    </interactant>
    <interactant intactId="EBI-10696113">
        <id>O75604-3</id>
        <label>USP2</label>
    </interactant>
    <organismsDiffer>false</organismsDiffer>
    <experiments>3</experiments>
</comment>
<comment type="subcellular location">
    <subcellularLocation>
        <location evidence="11 16 22">Nucleus</location>
    </subcellularLocation>
    <subcellularLocation>
        <location evidence="11">Nucleus</location>
        <location evidence="11">Nucleoplasm</location>
    </subcellularLocation>
    <subcellularLocation>
        <location evidence="11">Nucleus</location>
        <location evidence="11">Nucleolus</location>
    </subcellularLocation>
    <subcellularLocation>
        <location evidence="11 16">Cytoplasm</location>
    </subcellularLocation>
    <subcellularLocation>
        <location evidence="18">Chromosome</location>
    </subcellularLocation>
    <subcellularLocation>
        <location evidence="14">Chromosome</location>
        <location evidence="14">Telomere</location>
    </subcellularLocation>
    <subcellularLocation>
        <location evidence="16">Cell projection</location>
        <location evidence="16">Axon</location>
    </subcellularLocation>
    <subcellularLocation>
        <location evidence="16">Cell projection</location>
        <location evidence="16">Growth cone</location>
    </subcellularLocation>
    <text evidence="1 11 14 16 18 22">May be detected in the nucleolus only in cycling cells. At pachytene stage, colocalizes predominantly to the heterochromatic XY-body of sex chromosomes with DNA damage response proteins in a BRCA1-dependent manner (By similarity). Localizes with telomeric DNA in a transcription-dependent manner (PubMed:21112256). Under replication stress, colocalizes with a variety of DNA damage signaling and repair response proteins at distinct nuclear foci in mitotic S/G2- and G1-phase cells in a transcription- and RNA/DNA hybrid-dependent manner (PubMed:23149945). Localizes at limited number of nuclear foci (PubMed:24105744). Colocalizes with EXOSC9 in nuclear foci upon induction of transcription-related DNA damage at the S phase (PubMed:24105744). Most abundant in the nucleus. Detected in granules. Colocalized in cycling cells with FBL in the nucleolus.</text>
</comment>
<comment type="alternative products">
    <event type="alternative splicing"/>
    <isoform>
        <id>Q7Z333-1</id>
        <name>1</name>
        <sequence type="displayed"/>
    </isoform>
    <isoform>
        <id>Q7Z333-3</id>
        <name>3</name>
        <sequence type="described" ref="VSP_017124"/>
    </isoform>
    <isoform>
        <id>Q7Z333-4</id>
        <name>4</name>
        <sequence type="described" ref="VSP_028826"/>
    </isoform>
</comment>
<comment type="tissue specificity">
    <text evidence="5 6 8 11">Highly expressed in skeletal muscle. Expressed in heart, fibroblast, placenta and liver. Weakly expressed in brain and lung. Expressed in the cortex of the kidney (highly expressed in tubular epithelial cells but low expression in the glomerulus).</text>
</comment>
<comment type="domain">
    <text evidence="18">The N-terminus domain is necessary for S/G2 nuclear foci localization (PubMed:23149945).</text>
</comment>
<comment type="PTM">
    <text evidence="23">Ubiquitinated.</text>
</comment>
<comment type="PTM">
    <text evidence="22 23">Sumoylated preferentially with SUMO2 or SUMO3 (PubMed:24105744, PubMed:24244371).</text>
</comment>
<comment type="disease" evidence="5 8 9 10 19 20 21 22">
    <disease id="DI-01061">
        <name>Spinocerebellar ataxia, autosomal recessive, with axonal neuropathy 2</name>
        <acronym>SCAN2</acronym>
        <description>A form of spinocerebellar ataxia, a clinically and genetically heterogeneous group of cerebellar disorders. Patients show progressive incoordination of gait and often poor coordination of hands, speech and eye movements, due to degeneration of the cerebellum with variable involvement of the brainstem and spinal cord. SCAN2 is an autosomal recessive form associated with peripheral neuropathy and elevated serum alpha-fetoprotein, immunoglobulins and, less commonly, creatine kinase levels. Some SCAN2 patients manifest oculomotor apraxia.</description>
        <dbReference type="MIM" id="606002"/>
    </disease>
    <text>The disease is caused by variants affecting the gene represented in this entry.</text>
</comment>
<comment type="disease" evidence="5 6 15 22 23">
    <disease id="DI-00110">
        <name>Amyotrophic lateral sclerosis 4</name>
        <acronym>ALS4</acronym>
        <description>A form of amyotrophic lateral sclerosis with childhood- or adolescent-onset, and characterized by slow disease progression and the sparing of bulbar and respiratory muscles. Amyotrophic lateral sclerosis is a neurodegenerative disorder affecting upper motor neurons in the brain and lower motor neurons in the brain stem and spinal cord, resulting in fatal paralysis. Sensory abnormalities are absent. The pathologic hallmarks of the disease include pallor of the corticospinal tract due to loss of motor neurons, presence of ubiquitin-positive inclusions within surviving motor neurons, and deposition of pathologic aggregates. The etiology of amyotrophic lateral sclerosis is likely to be multifactorial, involving both genetic and environmental factors. The disease is inherited in 5-10% of the cases.</description>
        <dbReference type="MIM" id="602433"/>
    </disease>
    <text>The disease is caused by variants affecting the gene represented in this entry.</text>
</comment>
<comment type="similarity">
    <text evidence="27">Belongs to the DNA2/NAM7 helicase family.</text>
</comment>
<comment type="sequence caution" evidence="27">
    <conflict type="erroneous initiation">
        <sequence resource="EMBL-CDS" id="BAA91701"/>
    </conflict>
    <text>Truncated N-terminus.</text>
</comment>
<comment type="sequence caution" evidence="27">
    <conflict type="erroneous initiation">
        <sequence resource="EMBL-CDS" id="BAB14299"/>
    </conflict>
    <text>Truncated N-terminus.</text>
</comment>
<comment type="sequence caution" evidence="27">
    <conflict type="frameshift">
        <sequence resource="EMBL-CDS" id="CAD97857"/>
    </conflict>
</comment>
<reference key="1">
    <citation type="journal article" date="2004" name="Nat. Genet.">
        <title>Senataxin, the ortholog of a yeast RNA helicase, is mutant in ataxia-ocular apraxia 2.</title>
        <authorList>
            <person name="Moreira M.-C."/>
            <person name="Klur S."/>
            <person name="Watanabe M."/>
            <person name="Nemeth A.H."/>
            <person name="Le Ber I."/>
            <person name="Moniz J.-C."/>
            <person name="Tranchant C."/>
            <person name="Aubourg P."/>
            <person name="Tazir M."/>
            <person name="Schoels L."/>
            <person name="Pandolfo M."/>
            <person name="Schulz J.B."/>
            <person name="Pouget J."/>
            <person name="Calvas P."/>
            <person name="Shizuka-Ikeda M."/>
            <person name="Shoji M."/>
            <person name="Tanaka M."/>
            <person name="Izatt L."/>
            <person name="Shaw C.E."/>
            <person name="M'Zahem A."/>
            <person name="Dunne E."/>
            <person name="Bomont P."/>
            <person name="Benhassine T."/>
            <person name="Bouslam N."/>
            <person name="Stevanin G."/>
            <person name="Brice A."/>
            <person name="Guimaraes J."/>
            <person name="Mendonca P."/>
            <person name="Barbot C."/>
            <person name="Coutinho P."/>
            <person name="Sequeiros J."/>
            <person name="Duerr A."/>
            <person name="Warter J.-M."/>
            <person name="Koenig M."/>
        </authorList>
    </citation>
    <scope>NUCLEOTIDE SEQUENCE [MRNA] (ISOFORM 1)</scope>
    <scope>TISSUE SPECIFICITY</scope>
    <scope>VARIANT CYS-1152</scope>
    <scope>VARIANTS SCAN2 CYS-305; TRP-332; LEU-413; SER-1756 AND LEU-2213</scope>
    <scope>INVOLVEMENT IN ALS4</scope>
</reference>
<reference key="2">
    <citation type="journal article" date="2007" name="BMC Genomics">
        <title>The full-ORF clone resource of the German cDNA consortium.</title>
        <authorList>
            <person name="Bechtel S."/>
            <person name="Rosenfelder H."/>
            <person name="Duda A."/>
            <person name="Schmidt C.P."/>
            <person name="Ernst U."/>
            <person name="Wellenreuther R."/>
            <person name="Mehrle A."/>
            <person name="Schuster C."/>
            <person name="Bahr A."/>
            <person name="Bloecker H."/>
            <person name="Heubner D."/>
            <person name="Hoerlein A."/>
            <person name="Michel G."/>
            <person name="Wedler H."/>
            <person name="Koehrer K."/>
            <person name="Ottenwaelder B."/>
            <person name="Poustka A."/>
            <person name="Wiemann S."/>
            <person name="Schupp I."/>
        </authorList>
    </citation>
    <scope>NUCLEOTIDE SEQUENCE [LARGE SCALE MRNA] (ISOFORM 1)</scope>
    <scope>NUCLEOTIDE SEQUENCE [LARGE SCALE MRNA] OF 447-2677 (ISOFORM 3)</scope>
    <scope>VARIANTS GLU-1192; ARG-1252; VAL-1386 AND VAL-2587</scope>
    <source>
        <tissue>Amygdala</tissue>
        <tissue>Fetal kidney</tissue>
        <tissue>Retina</tissue>
    </source>
</reference>
<reference key="3">
    <citation type="journal article" date="2004" name="Nature">
        <title>DNA sequence and analysis of human chromosome 9.</title>
        <authorList>
            <person name="Humphray S.J."/>
            <person name="Oliver K."/>
            <person name="Hunt A.R."/>
            <person name="Plumb R.W."/>
            <person name="Loveland J.E."/>
            <person name="Howe K.L."/>
            <person name="Andrews T.D."/>
            <person name="Searle S."/>
            <person name="Hunt S.E."/>
            <person name="Scott C.E."/>
            <person name="Jones M.C."/>
            <person name="Ainscough R."/>
            <person name="Almeida J.P."/>
            <person name="Ambrose K.D."/>
            <person name="Ashwell R.I.S."/>
            <person name="Babbage A.K."/>
            <person name="Babbage S."/>
            <person name="Bagguley C.L."/>
            <person name="Bailey J."/>
            <person name="Banerjee R."/>
            <person name="Barker D.J."/>
            <person name="Barlow K.F."/>
            <person name="Bates K."/>
            <person name="Beasley H."/>
            <person name="Beasley O."/>
            <person name="Bird C.P."/>
            <person name="Bray-Allen S."/>
            <person name="Brown A.J."/>
            <person name="Brown J.Y."/>
            <person name="Burford D."/>
            <person name="Burrill W."/>
            <person name="Burton J."/>
            <person name="Carder C."/>
            <person name="Carter N.P."/>
            <person name="Chapman J.C."/>
            <person name="Chen Y."/>
            <person name="Clarke G."/>
            <person name="Clark S.Y."/>
            <person name="Clee C.M."/>
            <person name="Clegg S."/>
            <person name="Collier R.E."/>
            <person name="Corby N."/>
            <person name="Crosier M."/>
            <person name="Cummings A.T."/>
            <person name="Davies J."/>
            <person name="Dhami P."/>
            <person name="Dunn M."/>
            <person name="Dutta I."/>
            <person name="Dyer L.W."/>
            <person name="Earthrowl M.E."/>
            <person name="Faulkner L."/>
            <person name="Fleming C.J."/>
            <person name="Frankish A."/>
            <person name="Frankland J.A."/>
            <person name="French L."/>
            <person name="Fricker D.G."/>
            <person name="Garner P."/>
            <person name="Garnett J."/>
            <person name="Ghori J."/>
            <person name="Gilbert J.G.R."/>
            <person name="Glison C."/>
            <person name="Grafham D.V."/>
            <person name="Gribble S."/>
            <person name="Griffiths C."/>
            <person name="Griffiths-Jones S."/>
            <person name="Grocock R."/>
            <person name="Guy J."/>
            <person name="Hall R.E."/>
            <person name="Hammond S."/>
            <person name="Harley J.L."/>
            <person name="Harrison E.S.I."/>
            <person name="Hart E.A."/>
            <person name="Heath P.D."/>
            <person name="Henderson C.D."/>
            <person name="Hopkins B.L."/>
            <person name="Howard P.J."/>
            <person name="Howden P.J."/>
            <person name="Huckle E."/>
            <person name="Johnson C."/>
            <person name="Johnson D."/>
            <person name="Joy A.A."/>
            <person name="Kay M."/>
            <person name="Keenan S."/>
            <person name="Kershaw J.K."/>
            <person name="Kimberley A.M."/>
            <person name="King A."/>
            <person name="Knights A."/>
            <person name="Laird G.K."/>
            <person name="Langford C."/>
            <person name="Lawlor S."/>
            <person name="Leongamornlert D.A."/>
            <person name="Leversha M."/>
            <person name="Lloyd C."/>
            <person name="Lloyd D.M."/>
            <person name="Lovell J."/>
            <person name="Martin S."/>
            <person name="Mashreghi-Mohammadi M."/>
            <person name="Matthews L."/>
            <person name="McLaren S."/>
            <person name="McLay K.E."/>
            <person name="McMurray A."/>
            <person name="Milne S."/>
            <person name="Nickerson T."/>
            <person name="Nisbett J."/>
            <person name="Nordsiek G."/>
            <person name="Pearce A.V."/>
            <person name="Peck A.I."/>
            <person name="Porter K.M."/>
            <person name="Pandian R."/>
            <person name="Pelan S."/>
            <person name="Phillimore B."/>
            <person name="Povey S."/>
            <person name="Ramsey Y."/>
            <person name="Rand V."/>
            <person name="Scharfe M."/>
            <person name="Sehra H.K."/>
            <person name="Shownkeen R."/>
            <person name="Sims S.K."/>
            <person name="Skuce C.D."/>
            <person name="Smith M."/>
            <person name="Steward C.A."/>
            <person name="Swarbreck D."/>
            <person name="Sycamore N."/>
            <person name="Tester J."/>
            <person name="Thorpe A."/>
            <person name="Tracey A."/>
            <person name="Tromans A."/>
            <person name="Thomas D.W."/>
            <person name="Wall M."/>
            <person name="Wallis J.M."/>
            <person name="West A.P."/>
            <person name="Whitehead S.L."/>
            <person name="Willey D.L."/>
            <person name="Williams S.A."/>
            <person name="Wilming L."/>
            <person name="Wray P.W."/>
            <person name="Young L."/>
            <person name="Ashurst J.L."/>
            <person name="Coulson A."/>
            <person name="Blocker H."/>
            <person name="Durbin R.M."/>
            <person name="Sulston J.E."/>
            <person name="Hubbard T."/>
            <person name="Jackson M.J."/>
            <person name="Bentley D.R."/>
            <person name="Beck S."/>
            <person name="Rogers J."/>
            <person name="Dunham I."/>
        </authorList>
    </citation>
    <scope>NUCLEOTIDE SEQUENCE [LARGE SCALE GENOMIC DNA]</scope>
</reference>
<reference key="4">
    <citation type="journal article" date="2004" name="Genome Res.">
        <title>The status, quality, and expansion of the NIH full-length cDNA project: the Mammalian Gene Collection (MGC).</title>
        <authorList>
            <consortium name="The MGC Project Team"/>
        </authorList>
    </citation>
    <scope>NUCLEOTIDE SEQUENCE [LARGE SCALE MRNA] (ISOFORM 1)</scope>
    <scope>VARIANTS GLU-1192; ARG-1252; VAL-1386; ALA-1855; VAL-2587 AND GLY-2612</scope>
    <source>
        <tissue>Peripheral nerve</tissue>
        <tissue>Retinoblastoma</tissue>
        <tissue>Testis</tissue>
        <tissue>Uterus</tissue>
    </source>
</reference>
<reference key="5">
    <citation type="journal article" date="1998" name="DNA Res.">
        <title>Prediction of the coding sequences of unidentified human genes. X. The complete sequences of 100 new cDNA clones from brain which can code for large proteins in vitro.</title>
        <authorList>
            <person name="Ishikawa K."/>
            <person name="Nagase T."/>
            <person name="Suyama M."/>
            <person name="Miyajima N."/>
            <person name="Tanaka A."/>
            <person name="Kotani H."/>
            <person name="Nomura N."/>
            <person name="Ohara O."/>
        </authorList>
    </citation>
    <scope>NUCLEOTIDE SEQUENCE [LARGE SCALE MRNA] OF 15-2677 (ISOFORM 1)</scope>
    <source>
        <tissue>Brain</tissue>
    </source>
</reference>
<reference key="6">
    <citation type="journal article" date="2004" name="Nat. Genet.">
        <title>Complete sequencing and characterization of 21,243 full-length human cDNAs.</title>
        <authorList>
            <person name="Ota T."/>
            <person name="Suzuki Y."/>
            <person name="Nishikawa T."/>
            <person name="Otsuki T."/>
            <person name="Sugiyama T."/>
            <person name="Irie R."/>
            <person name="Wakamatsu A."/>
            <person name="Hayashi K."/>
            <person name="Sato H."/>
            <person name="Nagai K."/>
            <person name="Kimura K."/>
            <person name="Makita H."/>
            <person name="Sekine M."/>
            <person name="Obayashi M."/>
            <person name="Nishi T."/>
            <person name="Shibahara T."/>
            <person name="Tanaka T."/>
            <person name="Ishii S."/>
            <person name="Yamamoto J."/>
            <person name="Saito K."/>
            <person name="Kawai Y."/>
            <person name="Isono Y."/>
            <person name="Nakamura Y."/>
            <person name="Nagahari K."/>
            <person name="Murakami K."/>
            <person name="Yasuda T."/>
            <person name="Iwayanagi T."/>
            <person name="Wagatsuma M."/>
            <person name="Shiratori A."/>
            <person name="Sudo H."/>
            <person name="Hosoiri T."/>
            <person name="Kaku Y."/>
            <person name="Kodaira H."/>
            <person name="Kondo H."/>
            <person name="Sugawara M."/>
            <person name="Takahashi M."/>
            <person name="Kanda K."/>
            <person name="Yokoi T."/>
            <person name="Furuya T."/>
            <person name="Kikkawa E."/>
            <person name="Omura Y."/>
            <person name="Abe K."/>
            <person name="Kamihara K."/>
            <person name="Katsuta N."/>
            <person name="Sato K."/>
            <person name="Tanikawa M."/>
            <person name="Yamazaki M."/>
            <person name="Ninomiya K."/>
            <person name="Ishibashi T."/>
            <person name="Yamashita H."/>
            <person name="Murakawa K."/>
            <person name="Fujimori K."/>
            <person name="Tanai H."/>
            <person name="Kimata M."/>
            <person name="Watanabe M."/>
            <person name="Hiraoka S."/>
            <person name="Chiba Y."/>
            <person name="Ishida S."/>
            <person name="Ono Y."/>
            <person name="Takiguchi S."/>
            <person name="Watanabe S."/>
            <person name="Yosida M."/>
            <person name="Hotuta T."/>
            <person name="Kusano J."/>
            <person name="Kanehori K."/>
            <person name="Takahashi-Fujii A."/>
            <person name="Hara H."/>
            <person name="Tanase T.-O."/>
            <person name="Nomura Y."/>
            <person name="Togiya S."/>
            <person name="Komai F."/>
            <person name="Hara R."/>
            <person name="Takeuchi K."/>
            <person name="Arita M."/>
            <person name="Imose N."/>
            <person name="Musashino K."/>
            <person name="Yuuki H."/>
            <person name="Oshima A."/>
            <person name="Sasaki N."/>
            <person name="Aotsuka S."/>
            <person name="Yoshikawa Y."/>
            <person name="Matsunawa H."/>
            <person name="Ichihara T."/>
            <person name="Shiohata N."/>
            <person name="Sano S."/>
            <person name="Moriya S."/>
            <person name="Momiyama H."/>
            <person name="Satoh N."/>
            <person name="Takami S."/>
            <person name="Terashima Y."/>
            <person name="Suzuki O."/>
            <person name="Nakagawa S."/>
            <person name="Senoh A."/>
            <person name="Mizoguchi H."/>
            <person name="Goto Y."/>
            <person name="Shimizu F."/>
            <person name="Wakebe H."/>
            <person name="Hishigaki H."/>
            <person name="Watanabe T."/>
            <person name="Sugiyama A."/>
            <person name="Takemoto M."/>
            <person name="Kawakami B."/>
            <person name="Yamazaki M."/>
            <person name="Watanabe K."/>
            <person name="Kumagai A."/>
            <person name="Itakura S."/>
            <person name="Fukuzumi Y."/>
            <person name="Fujimori Y."/>
            <person name="Komiyama M."/>
            <person name="Tashiro H."/>
            <person name="Tanigami A."/>
            <person name="Fujiwara T."/>
            <person name="Ono T."/>
            <person name="Yamada K."/>
            <person name="Fujii Y."/>
            <person name="Ozaki K."/>
            <person name="Hirao M."/>
            <person name="Ohmori Y."/>
            <person name="Kawabata A."/>
            <person name="Hikiji T."/>
            <person name="Kobatake N."/>
            <person name="Inagaki H."/>
            <person name="Ikema Y."/>
            <person name="Okamoto S."/>
            <person name="Okitani R."/>
            <person name="Kawakami T."/>
            <person name="Noguchi S."/>
            <person name="Itoh T."/>
            <person name="Shigeta K."/>
            <person name="Senba T."/>
            <person name="Matsumura K."/>
            <person name="Nakajima Y."/>
            <person name="Mizuno T."/>
            <person name="Morinaga M."/>
            <person name="Sasaki M."/>
            <person name="Togashi T."/>
            <person name="Oyama M."/>
            <person name="Hata H."/>
            <person name="Watanabe M."/>
            <person name="Komatsu T."/>
            <person name="Mizushima-Sugano J."/>
            <person name="Satoh T."/>
            <person name="Shirai Y."/>
            <person name="Takahashi Y."/>
            <person name="Nakagawa K."/>
            <person name="Okumura K."/>
            <person name="Nagase T."/>
            <person name="Nomura N."/>
            <person name="Kikuchi H."/>
            <person name="Masuho Y."/>
            <person name="Yamashita R."/>
            <person name="Nakai K."/>
            <person name="Yada T."/>
            <person name="Nakamura Y."/>
            <person name="Ohara O."/>
            <person name="Isogai T."/>
            <person name="Sugano S."/>
        </authorList>
    </citation>
    <scope>NUCLEOTIDE SEQUENCE [LARGE SCALE MRNA] OF 1762-2677 (ISOFORM 1)</scope>
    <scope>VARIANT VAL-2587</scope>
    <source>
        <tissue>Teratocarcinoma</tissue>
    </source>
</reference>
<reference key="7">
    <citation type="journal article" date="2006" name="Cell">
        <title>Global, in vivo, and site-specific phosphorylation dynamics in signaling networks.</title>
        <authorList>
            <person name="Olsen J.V."/>
            <person name="Blagoev B."/>
            <person name="Gnad F."/>
            <person name="Macek B."/>
            <person name="Kumar C."/>
            <person name="Mortensen P."/>
            <person name="Mann M."/>
        </authorList>
    </citation>
    <scope>PHOSPHORYLATION [LARGE SCALE ANALYSIS] AT SER-1017 AND SER-1019</scope>
    <scope>IDENTIFICATION BY MASS SPECTROMETRY [LARGE SCALE ANALYSIS]</scope>
    <source>
        <tissue>Cervix carcinoma</tissue>
    </source>
</reference>
<reference key="8">
    <citation type="journal article" date="2006" name="Nat. Biotechnol.">
        <title>A probability-based approach for high-throughput protein phosphorylation analysis and site localization.</title>
        <authorList>
            <person name="Beausoleil S.A."/>
            <person name="Villen J."/>
            <person name="Gerber S.A."/>
            <person name="Rush J."/>
            <person name="Gygi S.P."/>
        </authorList>
    </citation>
    <scope>PHOSPHORYLATION [LARGE SCALE ANALYSIS] AT SER-1621</scope>
    <scope>IDENTIFICATION BY MASS SPECTROMETRY [LARGE SCALE ANALYSIS]</scope>
    <source>
        <tissue>Cervix carcinoma</tissue>
    </source>
</reference>
<reference key="9">
    <citation type="journal article" date="2007" name="J. Cell Biol.">
        <title>Senataxin, defective in ataxia oculomotor apraxia type 2, is involved in the defense against oxidative DNA damage.</title>
        <authorList>
            <person name="Suraweera A."/>
            <person name="Becherel O.J."/>
            <person name="Chen P."/>
            <person name="Rundle N."/>
            <person name="Woods R."/>
            <person name="Nakamura J."/>
            <person name="Gatei M."/>
            <person name="Criscuolo C."/>
            <person name="Filla A."/>
            <person name="Chessa L."/>
            <person name="Fusser M."/>
            <person name="Epe B."/>
            <person name="Gueven N."/>
            <person name="Lavin M.F."/>
        </authorList>
    </citation>
    <scope>FUNCTION</scope>
    <scope>TISSUE SPECIFICITY</scope>
    <scope>SUBCELLULAR LOCATION</scope>
</reference>
<reference key="10">
    <citation type="journal article" date="2008" name="Proc. Natl. Acad. Sci. U.S.A.">
        <title>A quantitative atlas of mitotic phosphorylation.</title>
        <authorList>
            <person name="Dephoure N."/>
            <person name="Zhou C."/>
            <person name="Villen J."/>
            <person name="Beausoleil S.A."/>
            <person name="Bakalarski C.E."/>
            <person name="Elledge S.J."/>
            <person name="Gygi S.P."/>
        </authorList>
    </citation>
    <scope>PHOSPHORYLATION [LARGE SCALE ANALYSIS] AT SER-615; SER-1017 AND SER-1019</scope>
    <scope>IDENTIFICATION BY MASS SPECTROMETRY [LARGE SCALE ANALYSIS]</scope>
    <source>
        <tissue>Cervix carcinoma</tissue>
    </source>
</reference>
<reference key="11">
    <citation type="journal article" date="2009" name="Hum. Mol. Genet.">
        <title>Functional role for senataxin, defective in ataxia oculomotor apraxia type 2, in transcriptional regulation.</title>
        <authorList>
            <person name="Suraweera A."/>
            <person name="Lim Y."/>
            <person name="Woods R."/>
            <person name="Birrell G.W."/>
            <person name="Nasim T."/>
            <person name="Becherel O.J."/>
            <person name="Lavin M.F."/>
        </authorList>
    </citation>
    <scope>FUNCTION</scope>
    <scope>INTERACTION WITH NCL; PABPN1; PABPC1; POLR2A; SF3B1 AND SMN1</scope>
</reference>
<reference key="12">
    <citation type="journal article" date="2009" name="Sci. Signal.">
        <title>Quantitative phosphoproteomic analysis of T cell receptor signaling reveals system-wide modulation of protein-protein interactions.</title>
        <authorList>
            <person name="Mayya V."/>
            <person name="Lundgren D.H."/>
            <person name="Hwang S.-I."/>
            <person name="Rezaul K."/>
            <person name="Wu L."/>
            <person name="Eng J.K."/>
            <person name="Rodionov V."/>
            <person name="Han D.K."/>
        </authorList>
    </citation>
    <scope>PHOSPHORYLATION [LARGE SCALE ANALYSIS] AT SER-1017</scope>
    <scope>IDENTIFICATION BY MASS SPECTROMETRY [LARGE SCALE ANALYSIS]</scope>
    <source>
        <tissue>Leukemic T-cell</tissue>
    </source>
</reference>
<reference key="13">
    <citation type="journal article" date="2010" name="Sci. Signal.">
        <title>Quantitative phosphoproteomics reveals widespread full phosphorylation site occupancy during mitosis.</title>
        <authorList>
            <person name="Olsen J.V."/>
            <person name="Vermeulen M."/>
            <person name="Santamaria A."/>
            <person name="Kumar C."/>
            <person name="Miller M.L."/>
            <person name="Jensen L.J."/>
            <person name="Gnad F."/>
            <person name="Cox J."/>
            <person name="Jensen T.S."/>
            <person name="Nigg E.A."/>
            <person name="Brunak S."/>
            <person name="Mann M."/>
        </authorList>
    </citation>
    <scope>PHOSPHORYLATION [LARGE SCALE ANALYSIS] AT SER-1017 AND SER-1019</scope>
    <scope>IDENTIFICATION BY MASS SPECTROMETRY [LARGE SCALE ANALYSIS]</scope>
    <source>
        <tissue>Cervix carcinoma</tissue>
    </source>
</reference>
<reference key="14">
    <citation type="journal article" date="2011" name="BMC Syst. Biol.">
        <title>Initial characterization of the human central proteome.</title>
        <authorList>
            <person name="Burkard T.R."/>
            <person name="Planyavsky M."/>
            <person name="Kaupe I."/>
            <person name="Breitwieser F.P."/>
            <person name="Buerckstuemmer T."/>
            <person name="Bennett K.L."/>
            <person name="Superti-Furga G."/>
            <person name="Colinge J."/>
        </authorList>
    </citation>
    <scope>IDENTIFICATION BY MASS SPECTROMETRY [LARGE SCALE ANALYSIS]</scope>
</reference>
<reference key="15">
    <citation type="journal article" date="2011" name="Brain">
        <title>Senataxin modulates neurite growth through fibroblast growth factor 8 signalling.</title>
        <authorList>
            <person name="Vantaggiato C."/>
            <person name="Bondioni S."/>
            <person name="Airoldi G."/>
            <person name="Bozzato A."/>
            <person name="Borsani G."/>
            <person name="Rugarli E.I."/>
            <person name="Bresolin N."/>
            <person name="Clementi E."/>
            <person name="Bassi M.T."/>
        </authorList>
    </citation>
    <scope>FUNCTION</scope>
    <scope>SUBCELLULAR LOCATION</scope>
</reference>
<reference key="16">
    <citation type="journal article" date="2011" name="DNA Repair">
        <title>Role of senataxin in DNA damage and telomeric stability.</title>
        <authorList>
            <person name="De Amicis A."/>
            <person name="Piane M."/>
            <person name="Ferrari F."/>
            <person name="Fanciulli M."/>
            <person name="Delia D."/>
            <person name="Chessa L."/>
        </authorList>
    </citation>
    <scope>FUNCTION</scope>
    <scope>SUBCELLULAR LOCATION</scope>
</reference>
<reference key="17">
    <citation type="journal article" date="2011" name="Mol. Cell">
        <title>Human senataxin resolves RNA/DNA hybrids formed at transcriptional pause sites to promote Xrn2-dependent termination.</title>
        <authorList>
            <person name="Skourti-Stathaki K."/>
            <person name="Proudfoot N.J."/>
            <person name="Gromak N."/>
        </authorList>
    </citation>
    <scope>FUNCTION</scope>
</reference>
<reference key="18">
    <citation type="journal article" date="2011" name="Sci. Signal.">
        <title>System-wide temporal characterization of the proteome and phosphoproteome of human embryonic stem cell differentiation.</title>
        <authorList>
            <person name="Rigbolt K.T."/>
            <person name="Prokhorova T.A."/>
            <person name="Akimov V."/>
            <person name="Henningsen J."/>
            <person name="Johansen P.T."/>
            <person name="Kratchmarova I."/>
            <person name="Kassem M."/>
            <person name="Mann M."/>
            <person name="Olsen J.V."/>
            <person name="Blagoev B."/>
        </authorList>
    </citation>
    <scope>PHOSPHORYLATION [LARGE SCALE ANALYSIS] AT SER-1017 AND SER-1019</scope>
    <scope>IDENTIFICATION BY MASS SPECTROMETRY [LARGE SCALE ANALYSIS]</scope>
</reference>
<reference key="19">
    <citation type="journal article" date="2013" name="Genes Dev.">
        <title>A SUMO-dependent interaction between Senataxin and the exosome, disrupted in the neurodegenerative disease AOA2, targets the exosome to sites of transcription-induced DNA damage.</title>
        <authorList>
            <person name="Richard P."/>
            <person name="Feng S."/>
            <person name="Manley J.L."/>
        </authorList>
    </citation>
    <scope>FUNCTION</scope>
    <scope>INTERACTION WITH EXOSC9 AND UBE2I</scope>
    <scope>SUMOYLATION</scope>
    <scope>SUBCELLULAR LOCATION</scope>
    <scope>CHARACTERIZATION OF VARIANTS SCAN2 CYS-305 AND LEU-413</scope>
    <scope>CHARACTERIZATION OF VARIANTS ALS4 ILE-3 AND SER-389</scope>
    <scope>MUTAGENESIS OF GLU-65</scope>
</reference>
<reference key="20">
    <citation type="journal article" date="2013" name="J. Proteome Res.">
        <title>Toward a comprehensive characterization of a human cancer cell phosphoproteome.</title>
        <authorList>
            <person name="Zhou H."/>
            <person name="Di Palma S."/>
            <person name="Preisinger C."/>
            <person name="Peng M."/>
            <person name="Polat A.N."/>
            <person name="Heck A.J."/>
            <person name="Mohammed S."/>
        </authorList>
    </citation>
    <scope>PHOSPHORYLATION [LARGE SCALE ANALYSIS] AT SER-642; SER-911; SER-947; SER-956; SER-1330; SER-1366; SER-1623; SER-1663 AND THR-2474</scope>
    <scope>IDENTIFICATION BY MASS SPECTROMETRY [LARGE SCALE ANALYSIS]</scope>
    <source>
        <tissue>Cervix carcinoma</tissue>
        <tissue>Erythroleukemia</tissue>
    </source>
</reference>
<reference key="21">
    <citation type="journal article" date="2013" name="Mol. Cell. Biol.">
        <title>Senataxin, defective in the neurodegenerative disorder ataxia with oculomotor apraxia 2, lies at the interface of transcription and the DNA damage response.</title>
        <authorList>
            <person name="Yuce O."/>
            <person name="West S.C."/>
        </authorList>
    </citation>
    <scope>INTERACTION WITH CHD4; POLR2A; PRKDC AND TRIM28</scope>
    <scope>SUBCELLULAR LOCATION</scope>
    <scope>DOMAIN</scope>
</reference>
<reference key="22">
    <citation type="journal article" date="2014" name="J. Proteomics">
        <title>An enzyme assisted RP-RPLC approach for in-depth analysis of human liver phosphoproteome.</title>
        <authorList>
            <person name="Bian Y."/>
            <person name="Song C."/>
            <person name="Cheng K."/>
            <person name="Dong M."/>
            <person name="Wang F."/>
            <person name="Huang J."/>
            <person name="Sun D."/>
            <person name="Wang L."/>
            <person name="Ye M."/>
            <person name="Zou H."/>
        </authorList>
    </citation>
    <scope>PHOSPHORYLATION [LARGE SCALE ANALYSIS] AT SER-1017 AND SER-1019</scope>
    <scope>IDENTIFICATION BY MASS SPECTROMETRY [LARGE SCALE ANALYSIS]</scope>
    <source>
        <tissue>Liver</tissue>
    </source>
</reference>
<reference key="23">
    <citation type="journal article" date="2014" name="Proc. Natl. Acad. Sci. U.S.A.">
        <title>Mapping of SUMO sites and analysis of SUMOylation changes induced by external stimuli.</title>
        <authorList>
            <person name="Impens F."/>
            <person name="Radoshevich L."/>
            <person name="Cossart P."/>
            <person name="Ribet D."/>
        </authorList>
    </citation>
    <scope>SUMOYLATION [LARGE SCALE ANALYSIS] AT LYS-339</scope>
    <scope>IDENTIFICATION BY MASS SPECTROMETRY [LARGE SCALE ANALYSIS]</scope>
</reference>
<reference key="24">
    <citation type="journal article" date="2015" name="Mol. Cell. Proteomics">
        <title>System-wide analysis of SUMOylation dynamics in response to replication stress reveals novel small ubiquitin-like modified target proteins and acceptor lysines relevant for genome stability.</title>
        <authorList>
            <person name="Xiao Z."/>
            <person name="Chang J.G."/>
            <person name="Hendriks I.A."/>
            <person name="Sigurdsson J.O."/>
            <person name="Olsen J.V."/>
            <person name="Vertegaal A.C."/>
        </authorList>
    </citation>
    <scope>SUMOYLATION [LARGE SCALE ANALYSIS] AT LYS-1063</scope>
    <scope>IDENTIFICATION BY MASS SPECTROMETRY [LARGE SCALE ANALYSIS]</scope>
</reference>
<reference key="25">
    <citation type="journal article" date="2016" name="Nature">
        <title>SMN and symmetric arginine dimethylation of RNA polymerase II C-terminal domain control termination.</title>
        <authorList>
            <person name="Yanling Zhao D."/>
            <person name="Gish G."/>
            <person name="Braunschweig U."/>
            <person name="Li Y."/>
            <person name="Ni Z."/>
            <person name="Schmitges F.W."/>
            <person name="Zhong G."/>
            <person name="Liu K."/>
            <person name="Li W."/>
            <person name="Moffat J."/>
            <person name="Vedadi M."/>
            <person name="Min J."/>
            <person name="Pawson T.J."/>
            <person name="Blencowe B.J."/>
            <person name="Greenblatt J.F."/>
        </authorList>
    </citation>
    <scope>FUNCTION</scope>
    <scope>INTERACTION WITH POLR2A AND SMN1</scope>
</reference>
<reference key="26">
    <citation type="journal article" date="2017" name="Nat. Struct. Mol. Biol.">
        <title>Site-specific mapping of the human SUMO proteome reveals co-modification with phosphorylation.</title>
        <authorList>
            <person name="Hendriks I.A."/>
            <person name="Lyon D."/>
            <person name="Young C."/>
            <person name="Jensen L.J."/>
            <person name="Vertegaal A.C."/>
            <person name="Nielsen M.L."/>
        </authorList>
    </citation>
    <scope>SUMOYLATION [LARGE SCALE ANALYSIS] AT LYS-894; LYS-1056; LYS-1340; LYS-1341 AND LYS-1415</scope>
    <scope>IDENTIFICATION BY MASS SPECTROMETRY [LARGE SCALE ANALYSIS]</scope>
</reference>
<reference key="27">
    <citation type="journal article" date="2004" name="Am. J. Hum. Genet.">
        <title>DNA/RNA helicase gene mutations in a form of juvenile amyotrophic lateral sclerosis (ALS4).</title>
        <authorList>
            <person name="Chen Y.-Z."/>
            <person name="Bennett C.L."/>
            <person name="Huynh H.M."/>
            <person name="Blair I.P."/>
            <person name="Puls I."/>
            <person name="Irobi J."/>
            <person name="Dierick I."/>
            <person name="Abel A."/>
            <person name="Kennerson M.L."/>
            <person name="Rabin B.A."/>
            <person name="Nicholson G.A."/>
            <person name="Auer-Grumbach M."/>
            <person name="Wagner K."/>
            <person name="De Jonghe P."/>
            <person name="Griffin J.W."/>
            <person name="Fischbeck K.H."/>
            <person name="Timmerman V."/>
            <person name="Cornblath D.R."/>
            <person name="Chance P.F."/>
        </authorList>
    </citation>
    <scope>VARIANTS ALS4 SER-389 AND HIS-2136</scope>
    <scope>TISSUE SPECIFICITY</scope>
</reference>
<reference key="28">
    <citation type="journal article" date="2006" name="Neurobiol. Dis.">
        <title>Senataxin, the yeast Sen1p orthologue: characterization of a unique protein in which recessive mutations cause ataxia and dominant mutations cause motor neuron disease.</title>
        <authorList>
            <person name="Chen Y.-Z."/>
            <person name="Hashemi S.H."/>
            <person name="Anderson S.K."/>
            <person name="Huang Y."/>
            <person name="Moreira M.-C."/>
            <person name="Lynch D.R."/>
            <person name="Glass I.A."/>
            <person name="Chance P.F."/>
            <person name="Bennett C.L."/>
        </authorList>
    </citation>
    <scope>VARIANT SCAN2 ARG-2368</scope>
    <scope>SUBCELLULAR LOCATION</scope>
    <scope>TISSUE SPECIFICITY</scope>
</reference>
<reference key="29">
    <citation type="journal article" date="2006" name="Neurology">
        <title>Autosomal recessive ataxia with peripheral neuropathy and elevated AFP: novel mutations in SETX.</title>
        <authorList>
            <person name="Asaka T."/>
            <person name="Yokoji H."/>
            <person name="Ito J."/>
            <person name="Yamaguchi K."/>
            <person name="Matsushima A."/>
        </authorList>
    </citation>
    <scope>VARIANTS SCAN2 ILE-274 AND CYS-1294</scope>
</reference>
<reference key="30">
    <citation type="journal article" date="2007" name="Neurogenetics">
        <title>In cis autosomal dominant mutation of Senataxin associated with tremor/ataxia syndrome.</title>
        <authorList>
            <person name="Bassuk A.G."/>
            <person name="Chen Y.Z."/>
            <person name="Batish S.D."/>
            <person name="Nagan N."/>
            <person name="Opal P."/>
            <person name="Chance P.F."/>
            <person name="Bennett C.L."/>
        </authorList>
    </citation>
    <scope>VARIANTS SCAN2 ASP-603 AND LYS-653</scope>
</reference>
<reference key="31">
    <citation type="journal article" date="2011" name="Amyotroph. Lateral Scler.">
        <title>Senataxin mutations and amyotrophic lateral sclerosis.</title>
        <authorList>
            <person name="Hirano M."/>
            <person name="Quinzii C.M."/>
            <person name="Mitsumoto H."/>
            <person name="Hays A.P."/>
            <person name="Roberts J.K."/>
            <person name="Richard P."/>
            <person name="Rowland L.P."/>
        </authorList>
    </citation>
    <scope>VARIANTS ALS4 GLY-1554; GLU-2029 AND THR-2547</scope>
</reference>
<reference key="32">
    <citation type="journal article" date="2013" name="Int. J. Neurosci.">
        <title>A new SETX mutation producing AOA2 in two siblings.</title>
        <authorList>
            <person name="Datta N."/>
            <person name="Hohler A."/>
        </authorList>
    </citation>
    <scope>VARIANTS SCAN2 VAL-274 AND ARG-1976</scope>
</reference>
<reference key="33">
    <citation type="journal article" date="2013" name="J. Neurol. Sci.">
        <title>Exome analysis reveals a Japanese family with spinocerebellar ataxia, autosomal recessive 1.</title>
        <authorList>
            <person name="Ichikawa Y."/>
            <person name="Ishiura H."/>
            <person name="Mitsui J."/>
            <person name="Takahashi Y."/>
            <person name="Kobayashi S."/>
            <person name="Takuma H."/>
            <person name="Kanazawa I."/>
            <person name="Doi K."/>
            <person name="Yoshimura J."/>
            <person name="Morishita S."/>
            <person name="Goto J."/>
            <person name="Tsuji S."/>
        </authorList>
    </citation>
    <scope>INVOLVEMENT IN SCAN2</scope>
</reference>
<reference key="34">
    <citation type="journal article" date="2013" name="Orphanet J. Rare Dis.">
        <title>SETX mutations are a frequent genetic cause of juvenile and adult onset cerebellar ataxia with neuropathy and elevated serum alpha-fetoprotein.</title>
        <authorList>
            <person name="Nanetti L."/>
            <person name="Cavalieri S."/>
            <person name="Pensato V."/>
            <person name="Erbetta A."/>
            <person name="Pareyson D."/>
            <person name="Panzeri M."/>
            <person name="Zorzi G."/>
            <person name="Antozzi C."/>
            <person name="Moroni I."/>
            <person name="Gellera C."/>
            <person name="Brusco A."/>
            <person name="Mariotti C."/>
        </authorList>
    </citation>
    <scope>VARIANTS SCAN2 LYS-331; LEU-496 AND THR-2229</scope>
    <scope>VARIANT ARG-992</scope>
</reference>
<reference key="35">
    <citation type="journal article" date="2013" name="PLoS ONE">
        <title>Protein interaction analysis of senataxin and the ALS4 L389S mutant yields insights into senataxin post-translational modification and uncovers mutant-specific binding with a brain cytoplasmic RNA-encoded peptide.</title>
        <authorList>
            <person name="Bennett C.L."/>
            <person name="Chen Y."/>
            <person name="Vignali M."/>
            <person name="Lo R.S."/>
            <person name="Mason A.G."/>
            <person name="Unal A."/>
            <person name="Huq Saifee N.P."/>
            <person name="Fields S."/>
            <person name="La Spada A.R."/>
        </authorList>
    </citation>
    <scope>VARIANT SER-389</scope>
    <scope>CHARACTERIZATION OF VARIANT ALS4 SER-389</scope>
    <scope>SUBUNIT</scope>
    <scope>UBIQUITINATION</scope>
    <scope>SUMOYLATION</scope>
</reference>